<dbReference type="EMBL" id="K02770">
    <property type="protein sequence ID" value="AAA36106.1"/>
    <property type="molecule type" value="mRNA"/>
</dbReference>
<dbReference type="EMBL" id="M54933">
    <property type="protein sequence ID" value="AAA59136.1"/>
    <property type="status" value="ALT_SEQ"/>
    <property type="molecule type" value="mRNA"/>
</dbReference>
<dbReference type="EMBL" id="X02532">
    <property type="protein sequence ID" value="CAA26372.1"/>
    <property type="molecule type" value="mRNA"/>
</dbReference>
<dbReference type="EMBL" id="X04500">
    <property type="protein sequence ID" value="CAA28185.1"/>
    <property type="molecule type" value="Genomic_DNA"/>
</dbReference>
<dbReference type="EMBL" id="M15330">
    <property type="protein sequence ID" value="AAA59135.1"/>
    <property type="molecule type" value="mRNA"/>
</dbReference>
<dbReference type="EMBL" id="M15840">
    <property type="protein sequence ID" value="AAA74137.1"/>
    <property type="molecule type" value="Genomic_DNA"/>
</dbReference>
<dbReference type="EMBL" id="X56087">
    <property type="protein sequence ID" value="CAA39567.1"/>
    <property type="molecule type" value="mRNA"/>
</dbReference>
<dbReference type="EMBL" id="BN000002">
    <property type="protein sequence ID" value="CAD29872.1"/>
    <property type="molecule type" value="Genomic_DNA"/>
</dbReference>
<dbReference type="EMBL" id="BT007213">
    <property type="protein sequence ID" value="AAP35877.1"/>
    <property type="molecule type" value="mRNA"/>
</dbReference>
<dbReference type="EMBL" id="CR407679">
    <property type="protein sequence ID" value="CAG28607.1"/>
    <property type="molecule type" value="mRNA"/>
</dbReference>
<dbReference type="EMBL" id="AY137079">
    <property type="protein sequence ID" value="AAM88883.1"/>
    <property type="molecule type" value="Genomic_DNA"/>
</dbReference>
<dbReference type="EMBL" id="AC079753">
    <property type="protein sequence ID" value="AAX88888.1"/>
    <property type="molecule type" value="Genomic_DNA"/>
</dbReference>
<dbReference type="EMBL" id="CH471217">
    <property type="protein sequence ID" value="EAW73605.1"/>
    <property type="molecule type" value="Genomic_DNA"/>
</dbReference>
<dbReference type="EMBL" id="BC008678">
    <property type="protein sequence ID" value="AAH08678.1"/>
    <property type="molecule type" value="mRNA"/>
</dbReference>
<dbReference type="CCDS" id="CCDS2102.1"/>
<dbReference type="PIR" id="A21851">
    <property type="entry name" value="A21851"/>
</dbReference>
<dbReference type="PIR" id="A25542">
    <property type="entry name" value="ICHU1B"/>
</dbReference>
<dbReference type="RefSeq" id="NP_000567.1">
    <property type="nucleotide sequence ID" value="NM_000576.3"/>
</dbReference>
<dbReference type="PDB" id="1HIB">
    <property type="method" value="X-ray"/>
    <property type="resolution" value="2.40 A"/>
    <property type="chains" value="A=117-269"/>
</dbReference>
<dbReference type="PDB" id="1I1B">
    <property type="method" value="X-ray"/>
    <property type="resolution" value="2.00 A"/>
    <property type="chains" value="A=117-269"/>
</dbReference>
<dbReference type="PDB" id="1IOB">
    <property type="method" value="X-ray"/>
    <property type="resolution" value="2.00 A"/>
    <property type="chains" value="A=117-269"/>
</dbReference>
<dbReference type="PDB" id="1ITB">
    <property type="method" value="X-ray"/>
    <property type="resolution" value="2.50 A"/>
    <property type="chains" value="A=117-269"/>
</dbReference>
<dbReference type="PDB" id="1L2H">
    <property type="method" value="X-ray"/>
    <property type="resolution" value="1.54 A"/>
    <property type="chains" value="A=117-269"/>
</dbReference>
<dbReference type="PDB" id="1S0L">
    <property type="method" value="X-ray"/>
    <property type="resolution" value="2.34 A"/>
    <property type="chains" value="A=117-269"/>
</dbReference>
<dbReference type="PDB" id="1T4Q">
    <property type="method" value="X-ray"/>
    <property type="resolution" value="2.10 A"/>
    <property type="chains" value="A=117-269"/>
</dbReference>
<dbReference type="PDB" id="1TOO">
    <property type="method" value="X-ray"/>
    <property type="resolution" value="2.10 A"/>
    <property type="chains" value="A=117-269"/>
</dbReference>
<dbReference type="PDB" id="1TP0">
    <property type="method" value="X-ray"/>
    <property type="resolution" value="2.20 A"/>
    <property type="chains" value="A=117-269"/>
</dbReference>
<dbReference type="PDB" id="1TWE">
    <property type="method" value="X-ray"/>
    <property type="resolution" value="2.10 A"/>
    <property type="chains" value="A=117-269"/>
</dbReference>
<dbReference type="PDB" id="1TWM">
    <property type="method" value="X-ray"/>
    <property type="resolution" value="2.26 A"/>
    <property type="chains" value="A=117-269"/>
</dbReference>
<dbReference type="PDB" id="21BI">
    <property type="method" value="X-ray"/>
    <property type="resolution" value="2.00 A"/>
    <property type="chains" value="A=117-269"/>
</dbReference>
<dbReference type="PDB" id="2I1B">
    <property type="method" value="X-ray"/>
    <property type="resolution" value="2.00 A"/>
    <property type="chains" value="A=117-269"/>
</dbReference>
<dbReference type="PDB" id="2KH2">
    <property type="method" value="NMR"/>
    <property type="chains" value="A=117-269"/>
</dbReference>
<dbReference type="PDB" id="2NVH">
    <property type="method" value="X-ray"/>
    <property type="resolution" value="1.53 A"/>
    <property type="chains" value="A=117-269"/>
</dbReference>
<dbReference type="PDB" id="31BI">
    <property type="method" value="X-ray"/>
    <property type="resolution" value="2.00 A"/>
    <property type="chains" value="A=117-269"/>
</dbReference>
<dbReference type="PDB" id="3LTQ">
    <property type="method" value="X-ray"/>
    <property type="resolution" value="2.10 A"/>
    <property type="chains" value="A=117-269"/>
</dbReference>
<dbReference type="PDB" id="3O4O">
    <property type="method" value="X-ray"/>
    <property type="resolution" value="3.30 A"/>
    <property type="chains" value="A=117-269"/>
</dbReference>
<dbReference type="PDB" id="3POK">
    <property type="method" value="X-ray"/>
    <property type="resolution" value="1.70 A"/>
    <property type="chains" value="A=117-269"/>
</dbReference>
<dbReference type="PDB" id="41BI">
    <property type="method" value="X-ray"/>
    <property type="resolution" value="2.90 A"/>
    <property type="chains" value="A=117-269"/>
</dbReference>
<dbReference type="PDB" id="4DEP">
    <property type="method" value="X-ray"/>
    <property type="resolution" value="3.10 A"/>
    <property type="chains" value="A/D=117-269"/>
</dbReference>
<dbReference type="PDB" id="4G6J">
    <property type="method" value="X-ray"/>
    <property type="resolution" value="2.03 A"/>
    <property type="chains" value="A=117-269"/>
</dbReference>
<dbReference type="PDB" id="4G6M">
    <property type="method" value="X-ray"/>
    <property type="resolution" value="1.81 A"/>
    <property type="chains" value="A=118-267"/>
</dbReference>
<dbReference type="PDB" id="4GAF">
    <property type="method" value="X-ray"/>
    <property type="resolution" value="2.15 A"/>
    <property type="chains" value="A=117-269"/>
</dbReference>
<dbReference type="PDB" id="4GAI">
    <property type="method" value="X-ray"/>
    <property type="resolution" value="1.49 A"/>
    <property type="chains" value="A/B=117-269"/>
</dbReference>
<dbReference type="PDB" id="4I1B">
    <property type="method" value="X-ray"/>
    <property type="resolution" value="2.00 A"/>
    <property type="chains" value="A=117-269"/>
</dbReference>
<dbReference type="PDB" id="5BVP">
    <property type="method" value="X-ray"/>
    <property type="resolution" value="2.20 A"/>
    <property type="chains" value="I=117-269"/>
</dbReference>
<dbReference type="PDB" id="5I1B">
    <property type="method" value="X-ray"/>
    <property type="resolution" value="2.10 A"/>
    <property type="chains" value="A=117-269"/>
</dbReference>
<dbReference type="PDB" id="5MVZ">
    <property type="method" value="X-ray"/>
    <property type="resolution" value="2.15 A"/>
    <property type="chains" value="U/V=117-269"/>
</dbReference>
<dbReference type="PDB" id="5R7W">
    <property type="method" value="X-ray"/>
    <property type="resolution" value="1.27 A"/>
    <property type="chains" value="A=117-269"/>
</dbReference>
<dbReference type="PDB" id="5R85">
    <property type="method" value="X-ray"/>
    <property type="resolution" value="1.44 A"/>
    <property type="chains" value="A=117-269"/>
</dbReference>
<dbReference type="PDB" id="5R86">
    <property type="method" value="X-ray"/>
    <property type="resolution" value="1.50 A"/>
    <property type="chains" value="A=117-269"/>
</dbReference>
<dbReference type="PDB" id="5R87">
    <property type="method" value="X-ray"/>
    <property type="resolution" value="1.47 A"/>
    <property type="chains" value="A=117-269"/>
</dbReference>
<dbReference type="PDB" id="5R88">
    <property type="method" value="X-ray"/>
    <property type="resolution" value="1.48 A"/>
    <property type="chains" value="A=117-269"/>
</dbReference>
<dbReference type="PDB" id="5R89">
    <property type="method" value="X-ray"/>
    <property type="resolution" value="1.65 A"/>
    <property type="chains" value="A=117-269"/>
</dbReference>
<dbReference type="PDB" id="5R8A">
    <property type="method" value="X-ray"/>
    <property type="resolution" value="1.47 A"/>
    <property type="chains" value="A=117-269"/>
</dbReference>
<dbReference type="PDB" id="5R8B">
    <property type="method" value="X-ray"/>
    <property type="resolution" value="1.49 A"/>
    <property type="chains" value="A=117-269"/>
</dbReference>
<dbReference type="PDB" id="5R8C">
    <property type="method" value="X-ray"/>
    <property type="resolution" value="1.54 A"/>
    <property type="chains" value="A=117-269"/>
</dbReference>
<dbReference type="PDB" id="5R8D">
    <property type="method" value="X-ray"/>
    <property type="resolution" value="1.47 A"/>
    <property type="chains" value="A=117-269"/>
</dbReference>
<dbReference type="PDB" id="5R8E">
    <property type="method" value="X-ray"/>
    <property type="resolution" value="1.35 A"/>
    <property type="chains" value="A=117-269"/>
</dbReference>
<dbReference type="PDB" id="5R8F">
    <property type="method" value="X-ray"/>
    <property type="resolution" value="1.41 A"/>
    <property type="chains" value="A=117-269"/>
</dbReference>
<dbReference type="PDB" id="5R8G">
    <property type="method" value="X-ray"/>
    <property type="resolution" value="1.43 A"/>
    <property type="chains" value="A=117-269"/>
</dbReference>
<dbReference type="PDB" id="5R8H">
    <property type="method" value="X-ray"/>
    <property type="resolution" value="1.50 A"/>
    <property type="chains" value="A=117-269"/>
</dbReference>
<dbReference type="PDB" id="5R8I">
    <property type="method" value="X-ray"/>
    <property type="resolution" value="1.47 A"/>
    <property type="chains" value="A=117-269"/>
</dbReference>
<dbReference type="PDB" id="5R8J">
    <property type="method" value="X-ray"/>
    <property type="resolution" value="1.62 A"/>
    <property type="chains" value="A=117-269"/>
</dbReference>
<dbReference type="PDB" id="5R8K">
    <property type="method" value="X-ray"/>
    <property type="resolution" value="1.47 A"/>
    <property type="chains" value="A=117-269"/>
</dbReference>
<dbReference type="PDB" id="5R8L">
    <property type="method" value="X-ray"/>
    <property type="resolution" value="1.56 A"/>
    <property type="chains" value="A=117-269"/>
</dbReference>
<dbReference type="PDB" id="5R8M">
    <property type="method" value="X-ray"/>
    <property type="resolution" value="1.39 A"/>
    <property type="chains" value="A=117-269"/>
</dbReference>
<dbReference type="PDB" id="5R8N">
    <property type="method" value="X-ray"/>
    <property type="resolution" value="1.48 A"/>
    <property type="chains" value="A=117-269"/>
</dbReference>
<dbReference type="PDB" id="5R8O">
    <property type="method" value="X-ray"/>
    <property type="resolution" value="1.42 A"/>
    <property type="chains" value="A=117-269"/>
</dbReference>
<dbReference type="PDB" id="5R8P">
    <property type="method" value="X-ray"/>
    <property type="resolution" value="1.53 A"/>
    <property type="chains" value="A=117-269"/>
</dbReference>
<dbReference type="PDB" id="5R8Q">
    <property type="method" value="X-ray"/>
    <property type="resolution" value="1.23 A"/>
    <property type="chains" value="A=117-269"/>
</dbReference>
<dbReference type="PDB" id="6I1B">
    <property type="method" value="NMR"/>
    <property type="chains" value="A=117-269"/>
</dbReference>
<dbReference type="PDB" id="6Y8I">
    <property type="method" value="X-ray"/>
    <property type="resolution" value="1.46 A"/>
    <property type="chains" value="A=117-269"/>
</dbReference>
<dbReference type="PDB" id="6Y8M">
    <property type="method" value="X-ray"/>
    <property type="resolution" value="1.90 A"/>
    <property type="chains" value="A=117-269"/>
</dbReference>
<dbReference type="PDB" id="7CHY">
    <property type="method" value="X-ray"/>
    <property type="resolution" value="2.65 A"/>
    <property type="chains" value="I=117-269"/>
</dbReference>
<dbReference type="PDB" id="7CHZ">
    <property type="method" value="X-ray"/>
    <property type="resolution" value="2.50 A"/>
    <property type="chains" value="I=117-269"/>
</dbReference>
<dbReference type="PDB" id="7I1B">
    <property type="method" value="NMR"/>
    <property type="chains" value="A=117-269"/>
</dbReference>
<dbReference type="PDB" id="7Z4T">
    <property type="method" value="X-ray"/>
    <property type="resolution" value="3.30 A"/>
    <property type="chains" value="I=117-269"/>
</dbReference>
<dbReference type="PDB" id="8C3U">
    <property type="method" value="X-ray"/>
    <property type="resolution" value="1.95 A"/>
    <property type="chains" value="A/B=117-269"/>
</dbReference>
<dbReference type="PDB" id="8RYK">
    <property type="method" value="X-ray"/>
    <property type="resolution" value="1.80 A"/>
    <property type="chains" value="A/B=117-269"/>
</dbReference>
<dbReference type="PDB" id="8RYS">
    <property type="method" value="X-ray"/>
    <property type="resolution" value="1.16 A"/>
    <property type="chains" value="A=117-269"/>
</dbReference>
<dbReference type="PDB" id="8RZB">
    <property type="method" value="X-ray"/>
    <property type="resolution" value="1.84 A"/>
    <property type="chains" value="A/B/C/D=117-269"/>
</dbReference>
<dbReference type="PDB" id="9ILB">
    <property type="method" value="X-ray"/>
    <property type="resolution" value="2.28 A"/>
    <property type="chains" value="A=117-269"/>
</dbReference>
<dbReference type="PDBsum" id="1HIB"/>
<dbReference type="PDBsum" id="1I1B"/>
<dbReference type="PDBsum" id="1IOB"/>
<dbReference type="PDBsum" id="1ITB"/>
<dbReference type="PDBsum" id="1L2H"/>
<dbReference type="PDBsum" id="1S0L"/>
<dbReference type="PDBsum" id="1T4Q"/>
<dbReference type="PDBsum" id="1TOO"/>
<dbReference type="PDBsum" id="1TP0"/>
<dbReference type="PDBsum" id="1TWE"/>
<dbReference type="PDBsum" id="1TWM"/>
<dbReference type="PDBsum" id="21BI"/>
<dbReference type="PDBsum" id="2I1B"/>
<dbReference type="PDBsum" id="2KH2"/>
<dbReference type="PDBsum" id="2NVH"/>
<dbReference type="PDBsum" id="31BI"/>
<dbReference type="PDBsum" id="3LTQ"/>
<dbReference type="PDBsum" id="3O4O"/>
<dbReference type="PDBsum" id="3POK"/>
<dbReference type="PDBsum" id="41BI"/>
<dbReference type="PDBsum" id="4DEP"/>
<dbReference type="PDBsum" id="4G6J"/>
<dbReference type="PDBsum" id="4G6M"/>
<dbReference type="PDBsum" id="4GAF"/>
<dbReference type="PDBsum" id="4GAI"/>
<dbReference type="PDBsum" id="4I1B"/>
<dbReference type="PDBsum" id="5BVP"/>
<dbReference type="PDBsum" id="5I1B"/>
<dbReference type="PDBsum" id="5MVZ"/>
<dbReference type="PDBsum" id="5R7W"/>
<dbReference type="PDBsum" id="5R85"/>
<dbReference type="PDBsum" id="5R86"/>
<dbReference type="PDBsum" id="5R87"/>
<dbReference type="PDBsum" id="5R88"/>
<dbReference type="PDBsum" id="5R89"/>
<dbReference type="PDBsum" id="5R8A"/>
<dbReference type="PDBsum" id="5R8B"/>
<dbReference type="PDBsum" id="5R8C"/>
<dbReference type="PDBsum" id="5R8D"/>
<dbReference type="PDBsum" id="5R8E"/>
<dbReference type="PDBsum" id="5R8F"/>
<dbReference type="PDBsum" id="5R8G"/>
<dbReference type="PDBsum" id="5R8H"/>
<dbReference type="PDBsum" id="5R8I"/>
<dbReference type="PDBsum" id="5R8J"/>
<dbReference type="PDBsum" id="5R8K"/>
<dbReference type="PDBsum" id="5R8L"/>
<dbReference type="PDBsum" id="5R8M"/>
<dbReference type="PDBsum" id="5R8N"/>
<dbReference type="PDBsum" id="5R8O"/>
<dbReference type="PDBsum" id="5R8P"/>
<dbReference type="PDBsum" id="5R8Q"/>
<dbReference type="PDBsum" id="6I1B"/>
<dbReference type="PDBsum" id="6Y8I"/>
<dbReference type="PDBsum" id="6Y8M"/>
<dbReference type="PDBsum" id="7CHY"/>
<dbReference type="PDBsum" id="7CHZ"/>
<dbReference type="PDBsum" id="7I1B"/>
<dbReference type="PDBsum" id="7Z4T"/>
<dbReference type="PDBsum" id="8C3U"/>
<dbReference type="PDBsum" id="8RYK"/>
<dbReference type="PDBsum" id="8RYS"/>
<dbReference type="PDBsum" id="8RZB"/>
<dbReference type="PDBsum" id="9ILB"/>
<dbReference type="BMRB" id="P01584"/>
<dbReference type="SMR" id="P01584"/>
<dbReference type="BioGRID" id="109769">
    <property type="interactions" value="49"/>
</dbReference>
<dbReference type="ComplexPortal" id="CPX-522">
    <property type="entry name" value="Interleukin-1 beta ligand-decoy receptor type 2 complex"/>
</dbReference>
<dbReference type="ComplexPortal" id="CPX-527">
    <property type="entry name" value="Interleukin-1 beta ligand-membrane bound receptor type 1 complex"/>
</dbReference>
<dbReference type="ComplexPortal" id="CPX-9128">
    <property type="entry name" value="Interleukin-1 beta ligand-soluble receptor type 1 complex"/>
</dbReference>
<dbReference type="CORUM" id="P01584"/>
<dbReference type="DIP" id="DIP-474N"/>
<dbReference type="FunCoup" id="P01584">
    <property type="interactions" value="1062"/>
</dbReference>
<dbReference type="IntAct" id="P01584">
    <property type="interactions" value="9"/>
</dbReference>
<dbReference type="STRING" id="9606.ENSP00000263341"/>
<dbReference type="BindingDB" id="P01584"/>
<dbReference type="ChEMBL" id="CHEMBL1909490"/>
<dbReference type="DrugBank" id="DB05767">
    <property type="generic name" value="Andrographolide"/>
</dbReference>
<dbReference type="DrugBank" id="DB06168">
    <property type="generic name" value="Canakinumab"/>
</dbReference>
<dbReference type="DrugBank" id="DB18736">
    <property type="generic name" value="Celastrol"/>
</dbReference>
<dbReference type="DrugBank" id="DB11994">
    <property type="generic name" value="Diacerein"/>
</dbReference>
<dbReference type="DrugBank" id="DB12140">
    <property type="generic name" value="Dilmapimod"/>
</dbReference>
<dbReference type="DrugBank" id="DB00843">
    <property type="generic name" value="Donepezil"/>
</dbReference>
<dbReference type="DrugBank" id="DB05442">
    <property type="generic name" value="Etiprednol dicloacetate"/>
</dbReference>
<dbReference type="DrugBank" id="DB10772">
    <property type="generic name" value="Foreskin keratinocyte (neonatal)"/>
</dbReference>
<dbReference type="DrugBank" id="DB05260">
    <property type="generic name" value="Gallium nitrate"/>
</dbReference>
<dbReference type="DrugBank" id="DB12119">
    <property type="generic name" value="Gevokizumab"/>
</dbReference>
<dbReference type="DrugBank" id="DB01296">
    <property type="generic name" value="Glucosamine"/>
</dbReference>
<dbReference type="DrugBank" id="DB01017">
    <property type="generic name" value="Minocycline"/>
</dbReference>
<dbReference type="DrugBank" id="DB06372">
    <property type="generic name" value="Rilonacept"/>
</dbReference>
<dbReference type="DrugBank" id="DB05412">
    <property type="generic name" value="Talmapimod"/>
</dbReference>
<dbReference type="DrugBank" id="DB12899">
    <property type="generic name" value="TT-301"/>
</dbReference>
<dbReference type="DrugBank" id="DB05133">
    <property type="generic name" value="VP025"/>
</dbReference>
<dbReference type="DrugBank" id="DB05470">
    <property type="generic name" value="VX-702"/>
</dbReference>
<dbReference type="DrugBank" id="DB05507">
    <property type="generic name" value="VX-765"/>
</dbReference>
<dbReference type="DrugCentral" id="P01584"/>
<dbReference type="TCDB" id="1.A.109.1.2">
    <property type="family name" value="the interleukin 1 (il1) family"/>
</dbReference>
<dbReference type="GlyGen" id="P01584">
    <property type="glycosylation" value="1 site"/>
</dbReference>
<dbReference type="iPTMnet" id="P01584"/>
<dbReference type="PhosphoSitePlus" id="P01584"/>
<dbReference type="SwissPalm" id="P01584"/>
<dbReference type="BioMuta" id="IL1B"/>
<dbReference type="DMDM" id="62906858"/>
<dbReference type="MassIVE" id="P01584"/>
<dbReference type="PaxDb" id="9606-ENSP00000263341"/>
<dbReference type="PeptideAtlas" id="P01584"/>
<dbReference type="ProteomicsDB" id="51391"/>
<dbReference type="ABCD" id="P01584">
    <property type="antibodies" value="8 sequenced antibodies"/>
</dbReference>
<dbReference type="Antibodypedia" id="771">
    <property type="antibodies" value="2552 antibodies from 54 providers"/>
</dbReference>
<dbReference type="DNASU" id="3553"/>
<dbReference type="Ensembl" id="ENST00000263341.7">
    <property type="protein sequence ID" value="ENSP00000263341.2"/>
    <property type="gene ID" value="ENSG00000125538.12"/>
</dbReference>
<dbReference type="GeneID" id="3553"/>
<dbReference type="KEGG" id="hsa:3553"/>
<dbReference type="MANE-Select" id="ENST00000263341.7">
    <property type="protein sequence ID" value="ENSP00000263341.2"/>
    <property type="RefSeq nucleotide sequence ID" value="NM_000576.3"/>
    <property type="RefSeq protein sequence ID" value="NP_000567.1"/>
</dbReference>
<dbReference type="UCSC" id="uc002tii.2">
    <property type="organism name" value="human"/>
</dbReference>
<dbReference type="AGR" id="HGNC:5992"/>
<dbReference type="CTD" id="3553"/>
<dbReference type="DisGeNET" id="3553"/>
<dbReference type="GeneCards" id="IL1B"/>
<dbReference type="HGNC" id="HGNC:5992">
    <property type="gene designation" value="IL1B"/>
</dbReference>
<dbReference type="HPA" id="ENSG00000125538">
    <property type="expression patterns" value="Tissue enhanced (bone marrow, urinary bladder)"/>
</dbReference>
<dbReference type="MalaCards" id="IL1B"/>
<dbReference type="MIM" id="147720">
    <property type="type" value="gene"/>
</dbReference>
<dbReference type="neXtProt" id="NX_P01584"/>
<dbReference type="OpenTargets" id="ENSG00000125538"/>
<dbReference type="PharmGKB" id="PA29808"/>
<dbReference type="VEuPathDB" id="HostDB:ENSG00000125538"/>
<dbReference type="eggNOG" id="ENOG502S3E9">
    <property type="taxonomic scope" value="Eukaryota"/>
</dbReference>
<dbReference type="GeneTree" id="ENSGT00950000182943"/>
<dbReference type="HOGENOM" id="CLU_083639_0_0_1"/>
<dbReference type="InParanoid" id="P01584"/>
<dbReference type="OMA" id="QKCLVMS"/>
<dbReference type="OrthoDB" id="9449069at2759"/>
<dbReference type="PAN-GO" id="P01584">
    <property type="GO annotations" value="8 GO annotations based on evolutionary models"/>
</dbReference>
<dbReference type="PhylomeDB" id="P01584"/>
<dbReference type="TreeFam" id="TF300203"/>
<dbReference type="BioCyc" id="MetaCyc:ENSG00000125538-MONOMER"/>
<dbReference type="PathwayCommons" id="P01584"/>
<dbReference type="Reactome" id="R-HSA-448706">
    <property type="pathway name" value="Interleukin-1 processing"/>
</dbReference>
<dbReference type="Reactome" id="R-HSA-5620971">
    <property type="pathway name" value="Pyroptosis"/>
</dbReference>
<dbReference type="Reactome" id="R-HSA-5660668">
    <property type="pathway name" value="CLEC7A/inflammasome pathway"/>
</dbReference>
<dbReference type="Reactome" id="R-HSA-6783783">
    <property type="pathway name" value="Interleukin-10 signaling"/>
</dbReference>
<dbReference type="Reactome" id="R-HSA-6785807">
    <property type="pathway name" value="Interleukin-4 and Interleukin-13 signaling"/>
</dbReference>
<dbReference type="Reactome" id="R-HSA-9020702">
    <property type="pathway name" value="Interleukin-1 signaling"/>
</dbReference>
<dbReference type="Reactome" id="R-HSA-9660826">
    <property type="pathway name" value="Purinergic signaling in leishmaniasis infection"/>
</dbReference>
<dbReference type="SignaLink" id="P01584"/>
<dbReference type="SIGNOR" id="P01584"/>
<dbReference type="BioGRID-ORCS" id="3553">
    <property type="hits" value="41 hits in 1151 CRISPR screens"/>
</dbReference>
<dbReference type="ChiTaRS" id="IL1B">
    <property type="organism name" value="human"/>
</dbReference>
<dbReference type="EvolutionaryTrace" id="P01584"/>
<dbReference type="GeneWiki" id="IL1B"/>
<dbReference type="GenomeRNAi" id="3553"/>
<dbReference type="Pharos" id="P01584">
    <property type="development level" value="Tclin"/>
</dbReference>
<dbReference type="PRO" id="PR:P01584"/>
<dbReference type="Proteomes" id="UP000005640">
    <property type="component" value="Chromosome 2"/>
</dbReference>
<dbReference type="RNAct" id="P01584">
    <property type="molecule type" value="protein"/>
</dbReference>
<dbReference type="Bgee" id="ENSG00000125538">
    <property type="expression patterns" value="Expressed in periodontal ligament and 160 other cell types or tissues"/>
</dbReference>
<dbReference type="ExpressionAtlas" id="P01584">
    <property type="expression patterns" value="baseline and differential"/>
</dbReference>
<dbReference type="GO" id="GO:0005829">
    <property type="term" value="C:cytosol"/>
    <property type="evidence" value="ECO:0000304"/>
    <property type="project" value="Reactome"/>
</dbReference>
<dbReference type="GO" id="GO:0005576">
    <property type="term" value="C:extracellular region"/>
    <property type="evidence" value="ECO:0000314"/>
    <property type="project" value="BHF-UCL"/>
</dbReference>
<dbReference type="GO" id="GO:0005615">
    <property type="term" value="C:extracellular space"/>
    <property type="evidence" value="ECO:0000314"/>
    <property type="project" value="UniProtKB"/>
</dbReference>
<dbReference type="GO" id="GO:0005764">
    <property type="term" value="C:lysosome"/>
    <property type="evidence" value="ECO:0007669"/>
    <property type="project" value="UniProtKB-SubCell"/>
</dbReference>
<dbReference type="GO" id="GO:0030141">
    <property type="term" value="C:secretory granule"/>
    <property type="evidence" value="ECO:0007669"/>
    <property type="project" value="Ensembl"/>
</dbReference>
<dbReference type="GO" id="GO:0005125">
    <property type="term" value="F:cytokine activity"/>
    <property type="evidence" value="ECO:0000314"/>
    <property type="project" value="UniProtKB"/>
</dbReference>
<dbReference type="GO" id="GO:0005178">
    <property type="term" value="F:integrin binding"/>
    <property type="evidence" value="ECO:0000314"/>
    <property type="project" value="UniProtKB"/>
</dbReference>
<dbReference type="GO" id="GO:0005149">
    <property type="term" value="F:interleukin-1 receptor binding"/>
    <property type="evidence" value="ECO:0000303"/>
    <property type="project" value="UniProtKB"/>
</dbReference>
<dbReference type="GO" id="GO:0019904">
    <property type="term" value="F:protein domain specific binding"/>
    <property type="evidence" value="ECO:0000353"/>
    <property type="project" value="UniProtKB"/>
</dbReference>
<dbReference type="GO" id="GO:0006915">
    <property type="term" value="P:apoptotic process"/>
    <property type="evidence" value="ECO:0000304"/>
    <property type="project" value="ProtInc"/>
</dbReference>
<dbReference type="GO" id="GO:0048143">
    <property type="term" value="P:astrocyte activation"/>
    <property type="evidence" value="ECO:0007669"/>
    <property type="project" value="Ensembl"/>
</dbReference>
<dbReference type="GO" id="GO:0007267">
    <property type="term" value="P:cell-cell signaling"/>
    <property type="evidence" value="ECO:0000304"/>
    <property type="project" value="ProtInc"/>
</dbReference>
<dbReference type="GO" id="GO:0097398">
    <property type="term" value="P:cellular response to interleukin-17"/>
    <property type="evidence" value="ECO:0007669"/>
    <property type="project" value="Ensembl"/>
</dbReference>
<dbReference type="GO" id="GO:0071222">
    <property type="term" value="P:cellular response to lipopolysaccharide"/>
    <property type="evidence" value="ECO:0000318"/>
    <property type="project" value="GO_Central"/>
</dbReference>
<dbReference type="GO" id="GO:0071260">
    <property type="term" value="P:cellular response to mechanical stimulus"/>
    <property type="evidence" value="ECO:0000270"/>
    <property type="project" value="UniProtKB"/>
</dbReference>
<dbReference type="GO" id="GO:0071466">
    <property type="term" value="P:cellular response to xenobiotic stimulus"/>
    <property type="evidence" value="ECO:0000314"/>
    <property type="project" value="MGI"/>
</dbReference>
<dbReference type="GO" id="GO:0019221">
    <property type="term" value="P:cytokine-mediated signaling pathway"/>
    <property type="evidence" value="ECO:0000314"/>
    <property type="project" value="BHF-UCL"/>
</dbReference>
<dbReference type="GO" id="GO:0050830">
    <property type="term" value="P:defense response to Gram-positive bacterium"/>
    <property type="evidence" value="ECO:0000314"/>
    <property type="project" value="UniProtKB"/>
</dbReference>
<dbReference type="GO" id="GO:0035234">
    <property type="term" value="P:ectopic germ cell programmed cell death"/>
    <property type="evidence" value="ECO:0007669"/>
    <property type="project" value="Ensembl"/>
</dbReference>
<dbReference type="GO" id="GO:0007566">
    <property type="term" value="P:embryo implantation"/>
    <property type="evidence" value="ECO:0000304"/>
    <property type="project" value="BHF-UCL"/>
</dbReference>
<dbReference type="GO" id="GO:0097192">
    <property type="term" value="P:extrinsic apoptotic signaling pathway in absence of ligand"/>
    <property type="evidence" value="ECO:0007669"/>
    <property type="project" value="Ensembl"/>
</dbReference>
<dbReference type="GO" id="GO:0001660">
    <property type="term" value="P:fever generation"/>
    <property type="evidence" value="ECO:0007669"/>
    <property type="project" value="UniProtKB-KW"/>
</dbReference>
<dbReference type="GO" id="GO:0030213">
    <property type="term" value="P:hyaluronan biosynthetic process"/>
    <property type="evidence" value="ECO:0000314"/>
    <property type="project" value="UniProtKB"/>
</dbReference>
<dbReference type="GO" id="GO:0006955">
    <property type="term" value="P:immune response"/>
    <property type="evidence" value="ECO:0000318"/>
    <property type="project" value="GO_Central"/>
</dbReference>
<dbReference type="GO" id="GO:0006954">
    <property type="term" value="P:inflammatory response"/>
    <property type="evidence" value="ECO:0000314"/>
    <property type="project" value="BHF-UCL"/>
</dbReference>
<dbReference type="GO" id="GO:0070498">
    <property type="term" value="P:interleukin-1-mediated signaling pathway"/>
    <property type="evidence" value="ECO:0000314"/>
    <property type="project" value="UniProtKB"/>
</dbReference>
<dbReference type="GO" id="GO:0007254">
    <property type="term" value="P:JNK cascade"/>
    <property type="evidence" value="ECO:0007669"/>
    <property type="project" value="Ensembl"/>
</dbReference>
<dbReference type="GO" id="GO:0070487">
    <property type="term" value="P:monocyte aggregation"/>
    <property type="evidence" value="ECO:0000314"/>
    <property type="project" value="UniProtKB"/>
</dbReference>
<dbReference type="GO" id="GO:0070164">
    <property type="term" value="P:negative regulation of adiponectin secretion"/>
    <property type="evidence" value="ECO:0000250"/>
    <property type="project" value="BHF-UCL"/>
</dbReference>
<dbReference type="GO" id="GO:0008285">
    <property type="term" value="P:negative regulation of cell population proliferation"/>
    <property type="evidence" value="ECO:0000314"/>
    <property type="project" value="BHF-UCL"/>
</dbReference>
<dbReference type="GO" id="GO:0010829">
    <property type="term" value="P:negative regulation of D-glucose transmembrane transport"/>
    <property type="evidence" value="ECO:0000250"/>
    <property type="project" value="BHF-UCL"/>
</dbReference>
<dbReference type="GO" id="GO:2001240">
    <property type="term" value="P:negative regulation of extrinsic apoptotic signaling pathway in absence of ligand"/>
    <property type="evidence" value="ECO:0000314"/>
    <property type="project" value="BHF-UCL"/>
</dbReference>
<dbReference type="GO" id="GO:1903597">
    <property type="term" value="P:negative regulation of gap junction assembly"/>
    <property type="evidence" value="ECO:0000314"/>
    <property type="project" value="ARUK-UCL"/>
</dbReference>
<dbReference type="GO" id="GO:0046627">
    <property type="term" value="P:negative regulation of insulin receptor signaling pathway"/>
    <property type="evidence" value="ECO:0000250"/>
    <property type="project" value="BHF-UCL"/>
</dbReference>
<dbReference type="GO" id="GO:0050995">
    <property type="term" value="P:negative regulation of lipid catabolic process"/>
    <property type="evidence" value="ECO:0000314"/>
    <property type="project" value="BHF-UCL"/>
</dbReference>
<dbReference type="GO" id="GO:0045833">
    <property type="term" value="P:negative regulation of lipid metabolic process"/>
    <property type="evidence" value="ECO:0000250"/>
    <property type="project" value="BHF-UCL"/>
</dbReference>
<dbReference type="GO" id="GO:0043409">
    <property type="term" value="P:negative regulation of MAPK cascade"/>
    <property type="evidence" value="ECO:0000250"/>
    <property type="project" value="BHF-UCL"/>
</dbReference>
<dbReference type="GO" id="GO:0050768">
    <property type="term" value="P:negative regulation of neurogenesis"/>
    <property type="evidence" value="ECO:0000304"/>
    <property type="project" value="ARUK-UCL"/>
</dbReference>
<dbReference type="GO" id="GO:0050805">
    <property type="term" value="P:negative regulation of synaptic transmission"/>
    <property type="evidence" value="ECO:0000250"/>
    <property type="project" value="ARUK-UCL"/>
</dbReference>
<dbReference type="GO" id="GO:0030593">
    <property type="term" value="P:neutrophil chemotaxis"/>
    <property type="evidence" value="ECO:0007669"/>
    <property type="project" value="Ensembl"/>
</dbReference>
<dbReference type="GO" id="GO:0045766">
    <property type="term" value="P:positive regulation of angiogenesis"/>
    <property type="evidence" value="ECO:0000314"/>
    <property type="project" value="BHF-UCL"/>
</dbReference>
<dbReference type="GO" id="GO:0043123">
    <property type="term" value="P:positive regulation of canonical NF-kappaB signal transduction"/>
    <property type="evidence" value="ECO:0000314"/>
    <property type="project" value="BHF-UCL"/>
</dbReference>
<dbReference type="GO" id="GO:0060355">
    <property type="term" value="P:positive regulation of cell adhesion molecule production"/>
    <property type="evidence" value="ECO:0000303"/>
    <property type="project" value="BHF-UCL"/>
</dbReference>
<dbReference type="GO" id="GO:0051781">
    <property type="term" value="P:positive regulation of cell division"/>
    <property type="evidence" value="ECO:0007669"/>
    <property type="project" value="UniProtKB-KW"/>
</dbReference>
<dbReference type="GO" id="GO:0030335">
    <property type="term" value="P:positive regulation of cell migration"/>
    <property type="evidence" value="ECO:0000314"/>
    <property type="project" value="BHF-UCL"/>
</dbReference>
<dbReference type="GO" id="GO:0008284">
    <property type="term" value="P:positive regulation of cell population proliferation"/>
    <property type="evidence" value="ECO:0000314"/>
    <property type="project" value="BHF-UCL"/>
</dbReference>
<dbReference type="GO" id="GO:0045917">
    <property type="term" value="P:positive regulation of complement activation"/>
    <property type="evidence" value="ECO:0000316"/>
    <property type="project" value="ARUK-UCL"/>
</dbReference>
<dbReference type="GO" id="GO:0045893">
    <property type="term" value="P:positive regulation of DNA-templated transcription"/>
    <property type="evidence" value="ECO:0000314"/>
    <property type="project" value="UniProtKB"/>
</dbReference>
<dbReference type="GO" id="GO:0010718">
    <property type="term" value="P:positive regulation of epithelial to mesenchymal transition"/>
    <property type="evidence" value="ECO:0000314"/>
    <property type="project" value="BHF-UCL"/>
</dbReference>
<dbReference type="GO" id="GO:0070374">
    <property type="term" value="P:positive regulation of ERK1 and ERK2 cascade"/>
    <property type="evidence" value="ECO:0000314"/>
    <property type="project" value="ARUK-UCL"/>
</dbReference>
<dbReference type="GO" id="GO:0031622">
    <property type="term" value="P:positive regulation of fever generation"/>
    <property type="evidence" value="ECO:0000250"/>
    <property type="project" value="BHF-UCL"/>
</dbReference>
<dbReference type="GO" id="GO:0010628">
    <property type="term" value="P:positive regulation of gene expression"/>
    <property type="evidence" value="ECO:0000314"/>
    <property type="project" value="UniProtKB"/>
</dbReference>
<dbReference type="GO" id="GO:0060252">
    <property type="term" value="P:positive regulation of glial cell proliferation"/>
    <property type="evidence" value="ECO:0000316"/>
    <property type="project" value="ARUK-UCL"/>
</dbReference>
<dbReference type="GO" id="GO:0032725">
    <property type="term" value="P:positive regulation of granulocyte macrophage colony-stimulating factor production"/>
    <property type="evidence" value="ECO:0000314"/>
    <property type="project" value="BHF-UCL"/>
</dbReference>
<dbReference type="GO" id="GO:0034116">
    <property type="term" value="P:positive regulation of heterotypic cell-cell adhesion"/>
    <property type="evidence" value="ECO:0000314"/>
    <property type="project" value="UniProtKB"/>
</dbReference>
<dbReference type="GO" id="GO:0033092">
    <property type="term" value="P:positive regulation of immature T cell proliferation in thymus"/>
    <property type="evidence" value="ECO:0000318"/>
    <property type="project" value="GO_Central"/>
</dbReference>
<dbReference type="GO" id="GO:0050729">
    <property type="term" value="P:positive regulation of inflammatory response"/>
    <property type="evidence" value="ECO:0000316"/>
    <property type="project" value="ARUK-UCL"/>
</dbReference>
<dbReference type="GO" id="GO:0032743">
    <property type="term" value="P:positive regulation of interleukin-2 production"/>
    <property type="evidence" value="ECO:0000315"/>
    <property type="project" value="BHF-UCL"/>
</dbReference>
<dbReference type="GO" id="GO:0032755">
    <property type="term" value="P:positive regulation of interleukin-6 production"/>
    <property type="evidence" value="ECO:0000316"/>
    <property type="project" value="ARUK-UCL"/>
</dbReference>
<dbReference type="GO" id="GO:0032757">
    <property type="term" value="P:positive regulation of interleukin-8 production"/>
    <property type="evidence" value="ECO:0000314"/>
    <property type="project" value="UniProtKB"/>
</dbReference>
<dbReference type="GO" id="GO:0046330">
    <property type="term" value="P:positive regulation of JNK cascade"/>
    <property type="evidence" value="ECO:0000250"/>
    <property type="project" value="ARUK-UCL"/>
</dbReference>
<dbReference type="GO" id="GO:0050996">
    <property type="term" value="P:positive regulation of lipid catabolic process"/>
    <property type="evidence" value="ECO:0000250"/>
    <property type="project" value="BHF-UCL"/>
</dbReference>
<dbReference type="GO" id="GO:0010744">
    <property type="term" value="P:positive regulation of macrophage derived foam cell differentiation"/>
    <property type="evidence" value="ECO:0000314"/>
    <property type="project" value="BHF-UCL"/>
</dbReference>
<dbReference type="GO" id="GO:0043410">
    <property type="term" value="P:positive regulation of MAPK cascade"/>
    <property type="evidence" value="ECO:0000314"/>
    <property type="project" value="BHF-UCL"/>
</dbReference>
<dbReference type="GO" id="GO:0051044">
    <property type="term" value="P:positive regulation of membrane protein ectodomain proteolysis"/>
    <property type="evidence" value="ECO:0000314"/>
    <property type="project" value="BHF-UCL"/>
</dbReference>
<dbReference type="GO" id="GO:0045840">
    <property type="term" value="P:positive regulation of mitotic nuclear division"/>
    <property type="evidence" value="ECO:0000315"/>
    <property type="project" value="BHF-UCL"/>
</dbReference>
<dbReference type="GO" id="GO:0071639">
    <property type="term" value="P:positive regulation of monocyte chemotactic protein-1 production"/>
    <property type="evidence" value="ECO:0000314"/>
    <property type="project" value="UniProtKB"/>
</dbReference>
<dbReference type="GO" id="GO:0150078">
    <property type="term" value="P:positive regulation of neuroinflammatory response"/>
    <property type="evidence" value="ECO:0000304"/>
    <property type="project" value="ARUK-UCL"/>
</dbReference>
<dbReference type="GO" id="GO:0045429">
    <property type="term" value="P:positive regulation of nitric oxide biosynthetic process"/>
    <property type="evidence" value="ECO:0000314"/>
    <property type="project" value="BHF-UCL"/>
</dbReference>
<dbReference type="GO" id="GO:1901224">
    <property type="term" value="P:positive regulation of non-canonical NF-kappaB signal transduction"/>
    <property type="evidence" value="ECO:0000314"/>
    <property type="project" value="BHF-UCL"/>
</dbReference>
<dbReference type="GO" id="GO:1900745">
    <property type="term" value="P:positive regulation of p38MAPK cascade"/>
    <property type="evidence" value="ECO:0000250"/>
    <property type="project" value="ARUK-UCL"/>
</dbReference>
<dbReference type="GO" id="GO:0051897">
    <property type="term" value="P:positive regulation of phosphatidylinositol 3-kinase/protein kinase B signal transduction"/>
    <property type="evidence" value="ECO:0000314"/>
    <property type="project" value="BHF-UCL"/>
</dbReference>
<dbReference type="GO" id="GO:0010641">
    <property type="term" value="P:positive regulation of platelet-derived growth factor receptor signaling pathway"/>
    <property type="evidence" value="ECO:0000314"/>
    <property type="project" value="BHF-UCL"/>
</dbReference>
<dbReference type="GO" id="GO:0031394">
    <property type="term" value="P:positive regulation of prostaglandin biosynthetic process"/>
    <property type="evidence" value="ECO:0000316"/>
    <property type="project" value="ARUK-UCL"/>
</dbReference>
<dbReference type="GO" id="GO:0032308">
    <property type="term" value="P:positive regulation of prostaglandin secretion"/>
    <property type="evidence" value="ECO:0000250"/>
    <property type="project" value="BHF-UCL"/>
</dbReference>
<dbReference type="GO" id="GO:0046827">
    <property type="term" value="P:positive regulation of protein export from nucleus"/>
    <property type="evidence" value="ECO:0000303"/>
    <property type="project" value="BHF-UCL"/>
</dbReference>
<dbReference type="GO" id="GO:1902680">
    <property type="term" value="P:positive regulation of RNA biosynthetic process"/>
    <property type="evidence" value="ECO:0000314"/>
    <property type="project" value="ARUK-UCL"/>
</dbReference>
<dbReference type="GO" id="GO:0002711">
    <property type="term" value="P:positive regulation of T cell mediated immunity"/>
    <property type="evidence" value="ECO:0000305"/>
    <property type="project" value="BHF-UCL"/>
</dbReference>
<dbReference type="GO" id="GO:0042102">
    <property type="term" value="P:positive regulation of T cell proliferation"/>
    <property type="evidence" value="ECO:0000314"/>
    <property type="project" value="BHF-UCL"/>
</dbReference>
<dbReference type="GO" id="GO:2000556">
    <property type="term" value="P:positive regulation of T-helper 1 cell cytokine production"/>
    <property type="evidence" value="ECO:0000314"/>
    <property type="project" value="UniProtKB"/>
</dbReference>
<dbReference type="GO" id="GO:1905075">
    <property type="term" value="P:positive regulation of tight junction disassembly"/>
    <property type="evidence" value="ECO:0000314"/>
    <property type="project" value="BHF-UCL"/>
</dbReference>
<dbReference type="GO" id="GO:0045944">
    <property type="term" value="P:positive regulation of transcription by RNA polymerase II"/>
    <property type="evidence" value="ECO:0007669"/>
    <property type="project" value="Ensembl"/>
</dbReference>
<dbReference type="GO" id="GO:0032729">
    <property type="term" value="P:positive regulation of type II interferon production"/>
    <property type="evidence" value="ECO:0000314"/>
    <property type="project" value="UniProtKB"/>
</dbReference>
<dbReference type="GO" id="GO:0010575">
    <property type="term" value="P:positive regulation of vascular endothelial growth factor production"/>
    <property type="evidence" value="ECO:0000314"/>
    <property type="project" value="BHF-UCL"/>
</dbReference>
<dbReference type="GO" id="GO:0030949">
    <property type="term" value="P:positive regulation of vascular endothelial growth factor receptor signaling pathway"/>
    <property type="evidence" value="ECO:0000305"/>
    <property type="project" value="BHF-UCL"/>
</dbReference>
<dbReference type="GO" id="GO:0043122">
    <property type="term" value="P:regulation of canonical NF-kappaB signal transduction"/>
    <property type="evidence" value="ECO:0000314"/>
    <property type="project" value="BHF-UCL"/>
</dbReference>
<dbReference type="GO" id="GO:0050691">
    <property type="term" value="P:regulation of defense response to virus by host"/>
    <property type="evidence" value="ECO:0007669"/>
    <property type="project" value="Ensembl"/>
</dbReference>
<dbReference type="GO" id="GO:0070372">
    <property type="term" value="P:regulation of ERK1 and ERK2 cascade"/>
    <property type="evidence" value="ECO:0000314"/>
    <property type="project" value="BHF-UCL"/>
</dbReference>
<dbReference type="GO" id="GO:1903140">
    <property type="term" value="P:regulation of establishment of endothelial barrier"/>
    <property type="evidence" value="ECO:0000314"/>
    <property type="project" value="UniProtKB"/>
</dbReference>
<dbReference type="GO" id="GO:0050796">
    <property type="term" value="P:regulation of insulin secretion"/>
    <property type="evidence" value="ECO:0000314"/>
    <property type="project" value="BHF-UCL"/>
</dbReference>
<dbReference type="GO" id="GO:0050767">
    <property type="term" value="P:regulation of neurogenesis"/>
    <property type="evidence" value="ECO:0000250"/>
    <property type="project" value="ARUK-UCL"/>
</dbReference>
<dbReference type="GO" id="GO:0050999">
    <property type="term" value="P:regulation of nitric-oxide synthase activity"/>
    <property type="evidence" value="ECO:0000314"/>
    <property type="project" value="UniProtKB"/>
</dbReference>
<dbReference type="GO" id="GO:0033198">
    <property type="term" value="P:response to ATP"/>
    <property type="evidence" value="ECO:0007669"/>
    <property type="project" value="Ensembl"/>
</dbReference>
<dbReference type="GO" id="GO:0009743">
    <property type="term" value="P:response to carbohydrate"/>
    <property type="evidence" value="ECO:0007669"/>
    <property type="project" value="Ensembl"/>
</dbReference>
<dbReference type="GO" id="GO:0070555">
    <property type="term" value="P:response to interleukin-1"/>
    <property type="evidence" value="ECO:0000314"/>
    <property type="project" value="ARUK-UCL"/>
</dbReference>
<dbReference type="GO" id="GO:0032496">
    <property type="term" value="P:response to lipopolysaccharide"/>
    <property type="evidence" value="ECO:0000314"/>
    <property type="project" value="ARUK-UCL"/>
</dbReference>
<dbReference type="GO" id="GO:0007165">
    <property type="term" value="P:signal transduction"/>
    <property type="evidence" value="ECO:0000304"/>
    <property type="project" value="ProtInc"/>
</dbReference>
<dbReference type="GO" id="GO:0014805">
    <property type="term" value="P:smooth muscle adaptation"/>
    <property type="evidence" value="ECO:0000303"/>
    <property type="project" value="BHF-UCL"/>
</dbReference>
<dbReference type="GO" id="GO:0010573">
    <property type="term" value="P:vascular endothelial growth factor production"/>
    <property type="evidence" value="ECO:0000314"/>
    <property type="project" value="UniProtKB"/>
</dbReference>
<dbReference type="CDD" id="cd23296">
    <property type="entry name" value="beta-trefoil_IL1B"/>
    <property type="match status" value="1"/>
</dbReference>
<dbReference type="FunFam" id="2.80.10.50:FF:000027">
    <property type="entry name" value="Interleukin-1 beta"/>
    <property type="match status" value="1"/>
</dbReference>
<dbReference type="Gene3D" id="2.80.10.50">
    <property type="match status" value="1"/>
</dbReference>
<dbReference type="InterPro" id="IPR020877">
    <property type="entry name" value="IL-1_CS"/>
</dbReference>
<dbReference type="InterPro" id="IPR000975">
    <property type="entry name" value="IL-1_fam"/>
</dbReference>
<dbReference type="InterPro" id="IPR003502">
    <property type="entry name" value="IL-1_propep"/>
</dbReference>
<dbReference type="InterPro" id="IPR008996">
    <property type="entry name" value="IL1/FGF"/>
</dbReference>
<dbReference type="PANTHER" id="PTHR10078:SF30">
    <property type="entry name" value="INTERLEUKIN-1 BETA"/>
    <property type="match status" value="1"/>
</dbReference>
<dbReference type="PANTHER" id="PTHR10078">
    <property type="entry name" value="INTERLEUKIN-1 FAMILY MEMBER"/>
    <property type="match status" value="1"/>
</dbReference>
<dbReference type="Pfam" id="PF00340">
    <property type="entry name" value="IL1"/>
    <property type="match status" value="1"/>
</dbReference>
<dbReference type="Pfam" id="PF02394">
    <property type="entry name" value="IL1_propep"/>
    <property type="match status" value="1"/>
</dbReference>
<dbReference type="PRINTS" id="PR00262">
    <property type="entry name" value="IL1HBGF"/>
</dbReference>
<dbReference type="PRINTS" id="PR00264">
    <property type="entry name" value="INTERLEUKIN1"/>
</dbReference>
<dbReference type="PRINTS" id="PR01359">
    <property type="entry name" value="INTRLEUKIN1B"/>
</dbReference>
<dbReference type="PRINTS" id="PR01357">
    <property type="entry name" value="INTRLEUKN1AB"/>
</dbReference>
<dbReference type="SMART" id="SM00125">
    <property type="entry name" value="IL1"/>
    <property type="match status" value="1"/>
</dbReference>
<dbReference type="SUPFAM" id="SSF50353">
    <property type="entry name" value="Cytokine"/>
    <property type="match status" value="1"/>
</dbReference>
<dbReference type="PROSITE" id="PS00253">
    <property type="entry name" value="INTERLEUKIN_1"/>
    <property type="match status" value="1"/>
</dbReference>
<reference key="1">
    <citation type="journal article" date="1984" name="Proc. Natl. Acad. Sci. U.S.A.">
        <title>Nucleotide sequence of human monocyte interleukin 1 precursor cDNA.</title>
        <authorList>
            <person name="Auron P.E."/>
            <person name="Webb A.C."/>
            <person name="Rosenwasser L.J."/>
            <person name="Mucci S.F."/>
            <person name="Rich A."/>
            <person name="Wolff S.M."/>
            <person name="Dinarello C.A."/>
        </authorList>
    </citation>
    <scope>NUCLEOTIDE SEQUENCE [MRNA]</scope>
</reference>
<reference key="2">
    <citation type="journal article" date="1985" name="Nature">
        <title>Cloning, sequence and expression of two distinct human interleukin-1 complementary DNAs.</title>
        <authorList>
            <person name="March C.J."/>
            <person name="Mosley B."/>
            <person name="Larsen A."/>
            <person name="Cerretti D.P."/>
            <person name="Braedt G."/>
            <person name="Price V."/>
            <person name="Gillis S."/>
            <person name="Henney C.S."/>
            <person name="Kronheim S.R."/>
            <person name="Grabstein K."/>
            <person name="Conlon P.J."/>
            <person name="Hopp T.P."/>
            <person name="Cosman D."/>
        </authorList>
    </citation>
    <scope>NUCLEOTIDE SEQUENCE [MRNA]</scope>
</reference>
<reference key="3">
    <citation type="journal article" date="1986" name="Nucleic Acids Res.">
        <title>Genomic sequence for human prointerleukin 1 beta: possible evolution from a reverse transcribed prointerleukin 1 alpha gene.</title>
        <authorList>
            <person name="Clark B.D."/>
            <person name="Collins K.L."/>
            <person name="Gandy M.S."/>
            <person name="Webb A.C."/>
            <person name="Auron P.E."/>
        </authorList>
    </citation>
    <scope>NUCLEOTIDE SEQUENCE [GENOMIC DNA]</scope>
    <source>
        <tissue>Leukocyte</tissue>
    </source>
</reference>
<reference key="4">
    <citation type="journal article" date="1987" name="Nucleic Acids Res.">
        <authorList>
            <person name="Clark B.D."/>
            <person name="Collins K.L."/>
            <person name="Gandy M.S."/>
            <person name="Webb A.C."/>
            <person name="Auron P.E."/>
        </authorList>
    </citation>
    <scope>ERRATUM OF PUBMED:3490654</scope>
</reference>
<reference key="5">
    <citation type="journal article" date="1987" name="Biochem. Biophys. Res. Commun.">
        <title>cDNA cloning of IL-1 alpha and IL-1 beta from mRNA of U937 cell line.</title>
        <authorList>
            <person name="Nishida T."/>
            <person name="Nishino N."/>
            <person name="Takano M."/>
            <person name="Kawai K."/>
            <person name="Bando K."/>
            <person name="Masui Y."/>
            <person name="Nakai S."/>
            <person name="Hirai Y."/>
        </authorList>
    </citation>
    <scope>NUCLEOTIDE SEQUENCE [MRNA]</scope>
    <source>
        <tissue>Histiocytic lymphoma</tissue>
    </source>
</reference>
<reference key="6">
    <citation type="journal article" date="1987" name="Gene">
        <title>Human interleukin-1 beta gene.</title>
        <authorList>
            <person name="Bensi G."/>
            <person name="Raugei G."/>
            <person name="Palla E."/>
            <person name="Carinci V."/>
            <person name="Buonamassa D.T."/>
            <person name="Melli M."/>
        </authorList>
    </citation>
    <scope>NUCLEOTIDE SEQUENCE [GENOMIC DNA]</scope>
</reference>
<reference key="7">
    <citation type="journal article" date="1989" name="Dokl. Akad. Nauk SSSR">
        <title>Cloning of the cDNA coding for human prointerleukin-1 alpha and prointerleukin-1 beta.</title>
        <authorList>
            <person name="Kotenko S.V."/>
            <person name="Bulenkov M.T."/>
            <person name="Veiko V.P."/>
            <person name="Epishin S.M."/>
            <person name="Lomakin I.B."/>
            <person name="Emel'Yanov A.V."/>
            <person name="Kozlov A.P."/>
            <person name="Konusova V.G."/>
            <person name="Kotov A.Y."/>
            <person name="Kurbatova T.V."/>
            <person name="Reshetnikov V.L."/>
            <person name="Simbirtsev A.S."/>
            <person name="Ketlinskii S.A."/>
            <person name="Vinetskii Y.P."/>
        </authorList>
    </citation>
    <scope>NUCLEOTIDE SEQUENCE [MRNA]</scope>
    <source>
        <tissue>Monocyte</tissue>
    </source>
</reference>
<reference key="8">
    <citation type="journal article" date="2002" name="Genomics">
        <title>A sequence-based map of the nine genes of the human interleukin-1 cluster.</title>
        <authorList>
            <person name="Nicklin M.J.H."/>
            <person name="Barton J.L."/>
            <person name="Nguyen M."/>
            <person name="Fitzgerald M.G."/>
            <person name="Duff W.G."/>
            <person name="Kornman K."/>
        </authorList>
    </citation>
    <scope>NUCLEOTIDE SEQUENCE [GENOMIC DNA]</scope>
</reference>
<reference key="9">
    <citation type="submission" date="2003-05" db="EMBL/GenBank/DDBJ databases">
        <title>Cloning of human full-length CDSs in BD Creator(TM) system donor vector.</title>
        <authorList>
            <person name="Kalnine N."/>
            <person name="Chen X."/>
            <person name="Rolfs A."/>
            <person name="Halleck A."/>
            <person name="Hines L."/>
            <person name="Eisenstein S."/>
            <person name="Koundinya M."/>
            <person name="Raphael J."/>
            <person name="Moreira D."/>
            <person name="Kelley T."/>
            <person name="LaBaer J."/>
            <person name="Lin Y."/>
            <person name="Phelan M."/>
            <person name="Farmer A."/>
        </authorList>
    </citation>
    <scope>NUCLEOTIDE SEQUENCE [LARGE SCALE MRNA]</scope>
</reference>
<reference key="10">
    <citation type="submission" date="2004-05" db="EMBL/GenBank/DDBJ databases">
        <title>Cloning of human full open reading frames in Gateway(TM) system entry vector (pDONR201).</title>
        <authorList>
            <person name="Ebert L."/>
            <person name="Schick M."/>
            <person name="Neubert P."/>
            <person name="Schatten R."/>
            <person name="Henze S."/>
            <person name="Korn B."/>
        </authorList>
    </citation>
    <scope>NUCLEOTIDE SEQUENCE [LARGE SCALE MRNA]</scope>
</reference>
<reference key="11">
    <citation type="submission" date="2002-07" db="EMBL/GenBank/DDBJ databases">
        <authorList>
            <consortium name="SeattleSNPs variation discovery resource"/>
        </authorList>
    </citation>
    <scope>NUCLEOTIDE SEQUENCE [GENOMIC DNA]</scope>
</reference>
<reference key="12">
    <citation type="journal article" date="2005" name="Nature">
        <title>Generation and annotation of the DNA sequences of human chromosomes 2 and 4.</title>
        <authorList>
            <person name="Hillier L.W."/>
            <person name="Graves T.A."/>
            <person name="Fulton R.S."/>
            <person name="Fulton L.A."/>
            <person name="Pepin K.H."/>
            <person name="Minx P."/>
            <person name="Wagner-McPherson C."/>
            <person name="Layman D."/>
            <person name="Wylie K."/>
            <person name="Sekhon M."/>
            <person name="Becker M.C."/>
            <person name="Fewell G.A."/>
            <person name="Delehaunty K.D."/>
            <person name="Miner T.L."/>
            <person name="Nash W.E."/>
            <person name="Kremitzki C."/>
            <person name="Oddy L."/>
            <person name="Du H."/>
            <person name="Sun H."/>
            <person name="Bradshaw-Cordum H."/>
            <person name="Ali J."/>
            <person name="Carter J."/>
            <person name="Cordes M."/>
            <person name="Harris A."/>
            <person name="Isak A."/>
            <person name="van Brunt A."/>
            <person name="Nguyen C."/>
            <person name="Du F."/>
            <person name="Courtney L."/>
            <person name="Kalicki J."/>
            <person name="Ozersky P."/>
            <person name="Abbott S."/>
            <person name="Armstrong J."/>
            <person name="Belter E.A."/>
            <person name="Caruso L."/>
            <person name="Cedroni M."/>
            <person name="Cotton M."/>
            <person name="Davidson T."/>
            <person name="Desai A."/>
            <person name="Elliott G."/>
            <person name="Erb T."/>
            <person name="Fronick C."/>
            <person name="Gaige T."/>
            <person name="Haakenson W."/>
            <person name="Haglund K."/>
            <person name="Holmes A."/>
            <person name="Harkins R."/>
            <person name="Kim K."/>
            <person name="Kruchowski S.S."/>
            <person name="Strong C.M."/>
            <person name="Grewal N."/>
            <person name="Goyea E."/>
            <person name="Hou S."/>
            <person name="Levy A."/>
            <person name="Martinka S."/>
            <person name="Mead K."/>
            <person name="McLellan M.D."/>
            <person name="Meyer R."/>
            <person name="Randall-Maher J."/>
            <person name="Tomlinson C."/>
            <person name="Dauphin-Kohlberg S."/>
            <person name="Kozlowicz-Reilly A."/>
            <person name="Shah N."/>
            <person name="Swearengen-Shahid S."/>
            <person name="Snider J."/>
            <person name="Strong J.T."/>
            <person name="Thompson J."/>
            <person name="Yoakum M."/>
            <person name="Leonard S."/>
            <person name="Pearman C."/>
            <person name="Trani L."/>
            <person name="Radionenko M."/>
            <person name="Waligorski J.E."/>
            <person name="Wang C."/>
            <person name="Rock S.M."/>
            <person name="Tin-Wollam A.-M."/>
            <person name="Maupin R."/>
            <person name="Latreille P."/>
            <person name="Wendl M.C."/>
            <person name="Yang S.-P."/>
            <person name="Pohl C."/>
            <person name="Wallis J.W."/>
            <person name="Spieth J."/>
            <person name="Bieri T.A."/>
            <person name="Berkowicz N."/>
            <person name="Nelson J.O."/>
            <person name="Osborne J."/>
            <person name="Ding L."/>
            <person name="Meyer R."/>
            <person name="Sabo A."/>
            <person name="Shotland Y."/>
            <person name="Sinha P."/>
            <person name="Wohldmann P.E."/>
            <person name="Cook L.L."/>
            <person name="Hickenbotham M.T."/>
            <person name="Eldred J."/>
            <person name="Williams D."/>
            <person name="Jones T.A."/>
            <person name="She X."/>
            <person name="Ciccarelli F.D."/>
            <person name="Izaurralde E."/>
            <person name="Taylor J."/>
            <person name="Schmutz J."/>
            <person name="Myers R.M."/>
            <person name="Cox D.R."/>
            <person name="Huang X."/>
            <person name="McPherson J.D."/>
            <person name="Mardis E.R."/>
            <person name="Clifton S.W."/>
            <person name="Warren W.C."/>
            <person name="Chinwalla A.T."/>
            <person name="Eddy S.R."/>
            <person name="Marra M.A."/>
            <person name="Ovcharenko I."/>
            <person name="Furey T.S."/>
            <person name="Miller W."/>
            <person name="Eichler E.E."/>
            <person name="Bork P."/>
            <person name="Suyama M."/>
            <person name="Torrents D."/>
            <person name="Waterston R.H."/>
            <person name="Wilson R.K."/>
        </authorList>
    </citation>
    <scope>NUCLEOTIDE SEQUENCE [LARGE SCALE GENOMIC DNA]</scope>
</reference>
<reference key="13">
    <citation type="submission" date="2005-07" db="EMBL/GenBank/DDBJ databases">
        <authorList>
            <person name="Mural R.J."/>
            <person name="Istrail S."/>
            <person name="Sutton G.G."/>
            <person name="Florea L."/>
            <person name="Halpern A.L."/>
            <person name="Mobarry C.M."/>
            <person name="Lippert R."/>
            <person name="Walenz B."/>
            <person name="Shatkay H."/>
            <person name="Dew I."/>
            <person name="Miller J.R."/>
            <person name="Flanigan M.J."/>
            <person name="Edwards N.J."/>
            <person name="Bolanos R."/>
            <person name="Fasulo D."/>
            <person name="Halldorsson B.V."/>
            <person name="Hannenhalli S."/>
            <person name="Turner R."/>
            <person name="Yooseph S."/>
            <person name="Lu F."/>
            <person name="Nusskern D.R."/>
            <person name="Shue B.C."/>
            <person name="Zheng X.H."/>
            <person name="Zhong F."/>
            <person name="Delcher A.L."/>
            <person name="Huson D.H."/>
            <person name="Kravitz S.A."/>
            <person name="Mouchard L."/>
            <person name="Reinert K."/>
            <person name="Remington K.A."/>
            <person name="Clark A.G."/>
            <person name="Waterman M.S."/>
            <person name="Eichler E.E."/>
            <person name="Adams M.D."/>
            <person name="Hunkapiller M.W."/>
            <person name="Myers E.W."/>
            <person name="Venter J.C."/>
        </authorList>
    </citation>
    <scope>NUCLEOTIDE SEQUENCE [LARGE SCALE GENOMIC DNA]</scope>
</reference>
<reference key="14">
    <citation type="journal article" date="2004" name="Genome Res.">
        <title>The status, quality, and expansion of the NIH full-length cDNA project: the Mammalian Gene Collection (MGC).</title>
        <authorList>
            <consortium name="The MGC Project Team"/>
        </authorList>
    </citation>
    <scope>NUCLEOTIDE SEQUENCE [LARGE SCALE MRNA]</scope>
    <source>
        <tissue>Lung</tissue>
    </source>
</reference>
<reference key="15">
    <citation type="journal article" date="1991" name="J. Exp. Med.">
        <title>Rapid and specific conversion of precursor interleukin 1 beta (IL-1 beta) to an active IL-1 species by human mast cell chymase.</title>
        <authorList>
            <person name="Mizutani H."/>
            <person name="Schechter N."/>
            <person name="Lazarus G."/>
            <person name="Black R.A."/>
            <person name="Kupper T.S."/>
        </authorList>
    </citation>
    <scope>PROTEIN SEQUENCE OF 114-135</scope>
    <source>
        <tissue>Skin</tissue>
    </source>
</reference>
<reference key="16">
    <citation type="journal article" date="1985" name="Nature">
        <title>Homogeneous interferon-inducing 22K factor is related to endogenous pyrogen and interleukin-1.</title>
        <authorList>
            <person name="Van Damme J."/>
            <person name="De Ley M."/>
            <person name="Opdenakker G."/>
            <person name="Billiau A."/>
            <person name="De Somer P."/>
            <person name="Van Beeumen J."/>
        </authorList>
    </citation>
    <scope>PROTEIN SEQUENCE OF 117-155</scope>
    <scope>VARIANT ASN-141</scope>
    <scope>FUNCTION</scope>
    <scope>TISSUE SPECIFICITY</scope>
</reference>
<reference key="17">
    <citation type="journal article" date="1988" name="Blood">
        <title>Effects of hematopoietin-1 and interleukin 1 activities on early hematopoietic cells of the bone marrow.</title>
        <authorList>
            <person name="Zsebo K.M."/>
            <person name="Wypych J."/>
            <person name="Yuschenkoff V.N."/>
            <person name="Lu H."/>
            <person name="Hunt P."/>
            <person name="Dukes P.P."/>
            <person name="Langley K.E."/>
        </authorList>
    </citation>
    <scope>PROTEIN SEQUENCE OF 117-128</scope>
</reference>
<reference key="18">
    <citation type="journal article" date="1991" name="Biochim. Biophys. Acta">
        <title>The role of arginine residues in interleukin 1 receptor binding.</title>
        <authorList>
            <person name="Nanduri V.B."/>
            <person name="Hulmes J.D."/>
            <person name="Pan Y.C."/>
            <person name="Kilian P.L."/>
            <person name="Stern A.S."/>
        </authorList>
    </citation>
    <scope>RECEPTOR-BINDING</scope>
</reference>
<reference key="19">
    <citation type="journal article" date="1993" name="Proc. Natl. Acad. Sci. U.S.A.">
        <title>Cleavage of interleukin 1 beta (IL-1 beta) precursor to produce active IL-1 beta by a conserved extracellular cysteine protease from Streptococcus pyogenes.</title>
        <authorList>
            <person name="Kapur V."/>
            <person name="Majesky M.W."/>
            <person name="Li L.L."/>
            <person name="Black R.A."/>
            <person name="Musser J.M."/>
        </authorList>
    </citation>
    <scope>PROTEOLYTIC CLEAVAGE (MICROBIAL INFECTION)</scope>
</reference>
<reference key="20">
    <citation type="journal article" date="2000" name="Int. Immunol.">
        <title>IL-12 synergizes with IL-18 or IL-1beta for IFN-gamma production from human T cells.</title>
        <authorList>
            <person name="Tominaga K."/>
            <person name="Yoshimoto T."/>
            <person name="Torigoe K."/>
            <person name="Kurimoto M."/>
            <person name="Matsui K."/>
            <person name="Hada T."/>
            <person name="Okamura H."/>
            <person name="Nakanishi K."/>
        </authorList>
    </citation>
    <scope>FUNCTION</scope>
</reference>
<reference key="21">
    <citation type="journal article" date="2001" name="Immunity">
        <title>Rapid secretion of interleukin-1beta by microvesicle shedding.</title>
        <authorList>
            <person name="MacKenzie A."/>
            <person name="Wilson H.L."/>
            <person name="Kiss-Toth E."/>
            <person name="Dower S.K."/>
            <person name="North R.A."/>
            <person name="Surprenant A."/>
        </authorList>
    </citation>
    <scope>SUBCELLULAR LOCATION</scope>
</reference>
<reference key="22">
    <citation type="journal article" date="2003" name="Arthritis Rheum.">
        <title>Anti-interleukin-6 receptor antibody therapy reduces vascular endothelial growth factor production in rheumatoid arthritis.</title>
        <authorList>
            <person name="Nakahara H."/>
            <person name="Song J."/>
            <person name="Sugimoto M."/>
            <person name="Hagihara K."/>
            <person name="Kishimoto T."/>
            <person name="Yoshizaki K."/>
            <person name="Nishimoto N."/>
        </authorList>
    </citation>
    <scope>FUNCTION</scope>
</reference>
<reference key="23">
    <citation type="journal article" date="2004" name="Proc. Natl. Acad. Sci. U.S.A.">
        <title>Phospholipases C and A2 control lysosome-mediated IL-1 beta secretion: Implications for inflammatory processes.</title>
        <authorList>
            <person name="Andrei C."/>
            <person name="Margiocco P."/>
            <person name="Poggi A."/>
            <person name="Lotti L.V."/>
            <person name="Torrisi M.R."/>
            <person name="Rubartelli A."/>
        </authorList>
    </citation>
    <scope>SUBCELLULAR LOCATION</scope>
    <scope>TISSUE SPECIFICITY</scope>
    <scope>INDUCTION BY LPS</scope>
    <scope>PROCESSING BY THE INFLAMMASOME</scope>
</reference>
<reference key="24">
    <citation type="journal article" date="2007" name="Cell Death Differ.">
        <title>The SPRY domain of Pyrin, mutated in familial Mediterranean fever patients, interacts with inflammasome components and inhibits proIL-1beta processing.</title>
        <authorList>
            <person name="Papin S."/>
            <person name="Cuenin S."/>
            <person name="Agostini L."/>
            <person name="Martinon F."/>
            <person name="Werner S."/>
            <person name="Beer H.D."/>
            <person name="Grutter C."/>
            <person name="Grutter M."/>
            <person name="Tschopp J."/>
        </authorList>
    </citation>
    <scope>INTERACTION WITH MEFV</scope>
</reference>
<reference key="25">
    <citation type="journal article" date="2010" name="Cell. Microbiol.">
        <title>Mycobacterium tuberculosis protein ESAT-6 is a potent activator of the NLRP3/ASC inflammasome.</title>
        <authorList>
            <person name="Mishra B.B."/>
            <person name="Moura-Alves P."/>
            <person name="Sonawane A."/>
            <person name="Hacohen N."/>
            <person name="Griffiths G."/>
            <person name="Moita L.F."/>
            <person name="Anes E."/>
        </authorList>
    </citation>
    <scope>INDUCTION BY M.TUBERCULOSIS</scope>
    <source>
        <tissue>Macrophage</tissue>
    </source>
</reference>
<reference key="26">
    <citation type="journal article" date="2013" name="Nat. Med.">
        <title>Activation of the Nlrp3 inflammasome in infiltrating macrophages by endocannabinoids mediates beta cell loss in type 2 diabetes.</title>
        <authorList>
            <person name="Jourdan T."/>
            <person name="Godlewski G."/>
            <person name="Cinar R."/>
            <person name="Bertola A."/>
            <person name="Szanda G."/>
            <person name="Liu J."/>
            <person name="Tam J."/>
            <person name="Han T."/>
            <person name="Mukhopadhyay B."/>
            <person name="Skarulis M.C."/>
            <person name="Ju C."/>
            <person name="Aouadi M."/>
            <person name="Czech M.P."/>
            <person name="Kunos G."/>
        </authorList>
    </citation>
    <scope>INDUCTION BY ENDOCANNABINOID ANANDAMIDE AND HIGH GLUCOSE</scope>
</reference>
<reference key="27">
    <citation type="journal article" date="2013" name="Semin. Immunol.">
        <title>The secretion of IL-1beta and options for release.</title>
        <authorList>
            <person name="Piccioli P."/>
            <person name="Rubartelli A."/>
        </authorList>
    </citation>
    <scope>REVIEW ON SECRETION</scope>
    <scope>SUBCELLULAR LOCATION</scope>
</reference>
<reference key="28">
    <citation type="journal article" date="2014" name="Nat. Immunol.">
        <title>The NLRP3 inflammasome is released as a particulate danger signal that amplifies the inflammatory response.</title>
        <authorList>
            <person name="Baroja-Mazo A."/>
            <person name="Martin-Sanchez F."/>
            <person name="Gomez A.I."/>
            <person name="Martinez C.M."/>
            <person name="Amores-Iniesta J."/>
            <person name="Compan V."/>
            <person name="Barbera-Cremades M."/>
            <person name="Yaguee J."/>
            <person name="Ruiz-Ortiz E."/>
            <person name="Anton J."/>
            <person name="Bujan S."/>
            <person name="Couillin I."/>
            <person name="Brough D."/>
            <person name="Arostegui J.I."/>
            <person name="Pelegrin P."/>
        </authorList>
    </citation>
    <scope>MUTAGENESIS OF ASP-27 AND ASP-116</scope>
</reference>
<reference key="29">
    <citation type="journal article" date="2016" name="Sci. Immunol.">
        <title>IL-1beta is an innate immune sensor of microbial proteolysis.</title>
        <authorList>
            <person name="LaRock C.N."/>
            <person name="Todd J."/>
            <person name="LaRock D.L."/>
            <person name="Olson J."/>
            <person name="O'Donoghue A.J."/>
            <person name="Robertson A.A."/>
            <person name="Cooper M.A."/>
            <person name="Hoffman H.M."/>
            <person name="Nizet V."/>
        </authorList>
    </citation>
    <scope>FUNCTION</scope>
    <scope>ACTIVITY REGULATION (MICROBIAL INFECTION)</scope>
    <scope>PROTEOLYTIC CLEAVAGE (MICROBIAL INFECTION)</scope>
</reference>
<reference key="30">
    <citation type="journal article" date="2017" name="J. Biol. Chem.">
        <title>Direct binding to integrins and loss of disulfide linkage in interleukin-1beta (IL-1beta) are involved in the agonistic action of IL-1beta.</title>
        <authorList>
            <person name="Takada Y.K."/>
            <person name="Yu J."/>
            <person name="Fujita M."/>
            <person name="Saegusa J."/>
            <person name="Wu C.Y."/>
            <person name="Takada Y."/>
        </authorList>
    </citation>
    <scope>INTERACTION WITH INTEGRINS ITGAV:ITGB3 AND ITGA5:ITGB1</scope>
    <scope>SITES IMPORTANT FOR INTEGRIN BINDING</scope>
    <scope>MUTAGENESIS OF LYS-171; LYS-179; LYS-181; LYS-190; LYS-204; GLU-221; PHE-233 AND GLU-244</scope>
</reference>
<reference key="31">
    <citation type="journal article" date="2020" name="Infect. Immun.">
        <title>Group A Streptococcus Infection of the Nasopharynx Requires Proinflammatory Signaling through the Interleukin-1 Receptor.</title>
        <authorList>
            <person name="LaRock D.L."/>
            <person name="Russell R."/>
            <person name="Johnson A.F."/>
            <person name="Wilde S."/>
            <person name="LaRock C.N."/>
        </authorList>
    </citation>
    <scope>ACTIVITY REGULATION (MICROBIAL INFECTION)</scope>
    <scope>PROTEOLYTIC CLEAVAGE (MICROBIAL INFECTION)</scope>
</reference>
<reference key="32">
    <citation type="journal article" date="2020" name="Cell">
        <title>A Translocation Pathway for Vesicle-Mediated Unconventional Protein Secretion.</title>
        <authorList>
            <person name="Zhang M."/>
            <person name="Liu L."/>
            <person name="Lin X."/>
            <person name="Wang Y."/>
            <person name="Li Y."/>
            <person name="Guo Q."/>
            <person name="Li S."/>
            <person name="Sun Y."/>
            <person name="Tao X."/>
            <person name="Zhang D."/>
            <person name="Lv X."/>
            <person name="Zheng L."/>
            <person name="Ge L."/>
        </authorList>
    </citation>
    <scope>SUBCELLULAR LOCATION</scope>
    <scope>INTERACTION WITH TMED10; HSP90AB AND HSP90B1</scope>
</reference>
<reference key="33">
    <citation type="journal article" date="2021" name="Int. Endod. J.">
        <title>NLRP6-caspase 4 inflammasome activation in response to cariogenic bacterial lipoteichoic acid in human dental pulp inflammation.</title>
        <authorList>
            <person name="Tian X.X."/>
            <person name="Li R."/>
            <person name="Liu C."/>
            <person name="Liu F."/>
            <person name="Yang L.J."/>
            <person name="Wang S.P."/>
            <person name="Wang C.L."/>
        </authorList>
    </citation>
    <scope>FUNCTION</scope>
    <scope>SUBCELLULAR LOCATION</scope>
</reference>
<reference key="34">
    <citation type="journal article" date="2021" name="Nature">
        <title>Gasdermin D pore structure reveals preferential release of mature interleukin-1.</title>
        <authorList>
            <person name="Xia S."/>
            <person name="Zhang Z."/>
            <person name="Magupalli V.G."/>
            <person name="Pablo J.L."/>
            <person name="Dong Y."/>
            <person name="Vora S.M."/>
            <person name="Wang L."/>
            <person name="Fu T.M."/>
            <person name="Jacobson M.P."/>
            <person name="Greka A."/>
            <person name="Lieberman J."/>
            <person name="Ruan J."/>
            <person name="Wu H."/>
        </authorList>
    </citation>
    <scope>SUBCELLULAR LOCATION</scope>
    <scope>MUTAGENESIS OF 6-GLU--ASP-27 AND 87-GLU--GLU-111</scope>
</reference>
<reference key="35">
    <citation type="journal article" date="1988" name="EMBO J.">
        <title>Crystal structure of the cytokine interleukin-1 beta.</title>
        <authorList>
            <person name="Priestle J.P."/>
            <person name="Schar H.-P."/>
            <person name="Grutter M.G."/>
        </authorList>
    </citation>
    <scope>X-RAY CRYSTALLOGRAPHY (3.0 ANGSTROMS)</scope>
</reference>
<reference key="36">
    <citation type="journal article" date="1989" name="J. Mol. Biol.">
        <title>Crystal structure of recombinant human interleukin-1 beta at 2.0-A resolution.</title>
        <authorList>
            <person name="Finzel B.C."/>
            <person name="Clancy L.L."/>
            <person name="Holland D.R."/>
            <person name="Muchmore S.W."/>
            <person name="Watenpaugh K.D."/>
            <person name="Einspahr H.M."/>
        </authorList>
    </citation>
    <scope>X-RAY CRYSTALLOGRAPHY (2.0 ANGSTROMS)</scope>
</reference>
<reference key="37">
    <citation type="journal article" date="1989" name="Proc. Natl. Acad. Sci. U.S.A.">
        <title>Crystallographic refinement of interleukin 1 beta at 2.0-A resolution.</title>
        <authorList>
            <person name="Priestle J.P."/>
            <person name="Schar H.-P."/>
            <person name="Gruetter M.G."/>
        </authorList>
    </citation>
    <scope>X-RAY CRYSTALLOGRAPHY (2.0 ANGSTROMS)</scope>
</reference>
<reference key="38">
    <citation type="journal article" date="1990" name="Biochemistry">
        <title>Determination of the secondary structure and molecular topology of interleukin-1 beta by use of two- and three-dimensional heteronuclear 15N-1H NMR spectroscopy.</title>
        <authorList>
            <person name="Driscoll P.C."/>
            <person name="Gronenborn A.M."/>
            <person name="Wingfield P.T."/>
            <person name="Clore G.M."/>
        </authorList>
    </citation>
    <scope>STRUCTURE BY NMR</scope>
</reference>
<reference key="39">
    <citation type="journal article" date="1991" name="Biochemistry">
        <title>High-resolution three-dimensional structure of interleukin 1 beta in solution by three- and four-dimensional nuclear magnetic resonance spectroscopy.</title>
        <authorList>
            <person name="Clore G.M."/>
            <person name="Wingfield P.T."/>
            <person name="Gronenborn A.M."/>
        </authorList>
    </citation>
    <scope>STRUCTURE BY NMR</scope>
</reference>
<reference key="40">
    <citation type="journal article" date="1997" name="Nature">
        <title>Crystal structure of the type-I interleukin-1 receptor complexed with interleukin-1beta.</title>
        <authorList>
            <person name="Vigers G.P.A."/>
            <person name="Anderson L.J."/>
            <person name="Caffes P."/>
            <person name="Brandhuber B.J."/>
        </authorList>
    </citation>
    <scope>X-RAY CRYSTALLOGRAPHY (2.5 ANGSTROMS) OF COMPLEX WITH RECEPTOR</scope>
</reference>
<reference key="41">
    <citation type="journal article" date="2010" name="Nat. Immunol.">
        <title>Structural insights into the assembly and activation of IL-1beta with its receptors.</title>
        <authorList>
            <person name="Wang D."/>
            <person name="Zhang S."/>
            <person name="Li L."/>
            <person name="Liu X."/>
            <person name="Mei K."/>
            <person name="Wang X."/>
        </authorList>
    </citation>
    <scope>X-RAY CRYSTALLOGRAPHY (3.3 ANGSTROMS) OF 117-269 IN COMPLEX WITH IL1R2 AND IL1RAP</scope>
</reference>
<feature type="propeptide" id="PRO_0000015301" description="Removed in mature form; by CASP1" evidence="17 20">
    <location>
        <begin position="1"/>
        <end position="116"/>
    </location>
</feature>
<feature type="chain" id="PRO_0000015302" description="Interleukin-1 beta" evidence="7">
    <location>
        <begin position="117"/>
        <end position="269"/>
    </location>
</feature>
<feature type="short sequence motif" description="Involved in interaction with TMED10 C-terminus" evidence="15">
    <location>
        <begin position="228"/>
        <end position="241"/>
    </location>
</feature>
<feature type="site" description="(Microbial infection) Cleavage; S.pyogenes SpeB" evidence="13">
    <location>
        <begin position="105"/>
        <end position="106"/>
    </location>
</feature>
<feature type="site" description="(Microbial infection) Cleavage; S.pyogenes SpeB" evidence="21">
    <location>
        <begin position="115"/>
        <end position="116"/>
    </location>
</feature>
<feature type="site" description="Involved in receptor binding">
    <location>
        <position position="120"/>
    </location>
</feature>
<feature type="site" description="Important for interaction with integrin" evidence="14">
    <location>
        <position position="171"/>
    </location>
</feature>
<feature type="site" description="Important for interaction with integrin" evidence="14">
    <location>
        <position position="179"/>
    </location>
</feature>
<feature type="site" description="Important for interaction with integrin" evidence="14">
    <location>
        <position position="181"/>
    </location>
</feature>
<feature type="site" description="Important for interaction with integrin" evidence="14">
    <location>
        <position position="190"/>
    </location>
</feature>
<feature type="site" description="Important for interaction with integrin" evidence="14">
    <location>
        <position position="204"/>
    </location>
</feature>
<feature type="sequence variant" id="VAR_073951" description="Requires 2 nucleotide substitutions; dbSNP:rs144640380." evidence="20">
    <original>E</original>
    <variation>N</variation>
    <location>
        <position position="141"/>
    </location>
</feature>
<feature type="mutagenesis site" description="Promotes release of IL1B precursors through the Gasdermin-D (GSDMD) ring-shaped pore complex." evidence="19">
    <original>ELASEMMAYYSGNEDDLFFEAD</original>
    <variation>ALASAMMAYYSGNAAALFFAAA</variation>
    <location>
        <begin position="6"/>
        <end position="27"/>
    </location>
</feature>
<feature type="mutagenesis site" description="Loss of activation by CASP1; when associated with A-116." evidence="12">
    <original>D</original>
    <variation>A</variation>
    <location>
        <position position="27"/>
    </location>
</feature>
<feature type="mutagenesis site" description="Promotes release of IL1B precursors through the Gasdermin-D (GSDMD) ring-shaped pore complex." evidence="19">
    <original>ENDLSTFFPFIFEEEPIFFDTWDNE</original>
    <variation>ANDLSTFFPFIFAAAPIFFATWANA</variation>
    <location>
        <begin position="87"/>
        <end position="111"/>
    </location>
</feature>
<feature type="mutagenesis site" description="Loss of activation by CASP1; when associated with A-27." evidence="12">
    <original>D</original>
    <variation>A</variation>
    <location>
        <position position="116"/>
    </location>
</feature>
<feature type="mutagenesis site" description="Suppression of integrin binding; when associated with K-244. Markedly reduced activity; when associated with E-190; E-204 and C-233." evidence="14">
    <original>K</original>
    <variation>E</variation>
    <location>
        <position position="171"/>
    </location>
</feature>
<feature type="mutagenesis site" description="Suppression of integrin binding; when associated with E-181 and K-244. Markedly reduced activity; when associated with E-181; E-190; E-204 and C-233." evidence="14">
    <original>K</original>
    <variation>E</variation>
    <location>
        <position position="179"/>
    </location>
</feature>
<feature type="mutagenesis site" description="Suppression of integrin binding; when associated with E-179 and K-244. Markedly reduced activity; when associated with E-179; E-190; E-204 and C-233." evidence="14">
    <original>K</original>
    <variation>E</variation>
    <location>
        <position position="181"/>
    </location>
</feature>
<feature type="mutagenesis site" description="Suppression of integrin binding; when associated with K-244. Markedly reduced activity; when associated with E-171; E-204 and C-233. Markedly reduced activity; when associated with E-179; E-181; E-204 and C-233." evidence="14">
    <original>K</original>
    <variation>E</variation>
    <location>
        <position position="190"/>
    </location>
</feature>
<feature type="mutagenesis site" description="Suppression of integrin binding; when associated with K-244. Markedly reduced activity; when associated with E-171; E-190 and C-233. Markedly reduced activity; when associated with E-179; E-181; E-190 and C-233." evidence="14">
    <original>K</original>
    <variation>E</variation>
    <location>
        <position position="204"/>
    </location>
</feature>
<feature type="mutagenesis site" description="Enhanced integrin binding." evidence="14">
    <original>E</original>
    <variation>K</variation>
    <location>
        <position position="221"/>
    </location>
</feature>
<feature type="mutagenesis site" description="No effect on binding to IL1R or on IL1B activity. Markedly reduced activity; when associated with E-171; E-190 and E-204. Markedly reduced activity; when associated with E-179; E-181; E-190 and E-204." evidence="14">
    <original>F</original>
    <variation>C</variation>
    <location>
        <position position="233"/>
    </location>
</feature>
<feature type="mutagenesis site" description="Increased affinity for integrin ITGAV:ITGB3. Suppression of integrin binding; when associated with E-171; E-190 or E-204. Suppression of integrin binding; when associated with E-179 and E-181." evidence="14">
    <original>E</original>
    <variation>K</variation>
    <location>
        <position position="244"/>
    </location>
</feature>
<feature type="sequence conflict" description="In Ref. 1; AAA36106/AAA59136 and 10; CAG28607." evidence="23" ref="1 10">
    <original>E</original>
    <variation>K</variation>
    <location>
        <position position="6"/>
    </location>
</feature>
<feature type="sequence conflict" description="In Ref. 16; AA sequence." evidence="23" ref="16">
    <original>C</original>
    <variation>A</variation>
    <location>
        <position position="124"/>
    </location>
</feature>
<feature type="sequence conflict" description="In Ref. 16; AA sequence." evidence="23" ref="16">
    <original>Q</original>
    <variation>D</variation>
    <location>
        <position position="155"/>
    </location>
</feature>
<feature type="strand" evidence="27">
    <location>
        <begin position="121"/>
        <end position="128"/>
    </location>
</feature>
<feature type="strand" evidence="27">
    <location>
        <begin position="133"/>
        <end position="140"/>
    </location>
</feature>
<feature type="strand" evidence="27">
    <location>
        <begin position="142"/>
        <end position="145"/>
    </location>
</feature>
<feature type="helix" evidence="27">
    <location>
        <begin position="149"/>
        <end position="154"/>
    </location>
</feature>
<feature type="strand" evidence="27">
    <location>
        <begin position="158"/>
        <end position="162"/>
    </location>
</feature>
<feature type="strand" evidence="27">
    <location>
        <begin position="171"/>
        <end position="178"/>
    </location>
</feature>
<feature type="strand" evidence="27">
    <location>
        <begin position="181"/>
        <end position="190"/>
    </location>
</feature>
<feature type="strand" evidence="27">
    <location>
        <begin position="193"/>
        <end position="200"/>
    </location>
</feature>
<feature type="turn" evidence="27">
    <location>
        <begin position="203"/>
        <end position="205"/>
    </location>
</feature>
<feature type="helix" evidence="27">
    <location>
        <begin position="213"/>
        <end position="215"/>
    </location>
</feature>
<feature type="strand" evidence="27">
    <location>
        <begin position="217"/>
        <end position="222"/>
    </location>
</feature>
<feature type="strand" evidence="27">
    <location>
        <begin position="225"/>
        <end position="233"/>
    </location>
</feature>
<feature type="strand" evidence="27">
    <location>
        <begin position="237"/>
        <end position="240"/>
    </location>
</feature>
<feature type="strand" evidence="25">
    <location>
        <begin position="242"/>
        <end position="247"/>
    </location>
</feature>
<feature type="strand" evidence="27">
    <location>
        <begin position="249"/>
        <end position="251"/>
    </location>
</feature>
<feature type="strand" evidence="26">
    <location>
        <begin position="254"/>
        <end position="259"/>
    </location>
</feature>
<feature type="strand" evidence="27">
    <location>
        <begin position="262"/>
        <end position="266"/>
    </location>
</feature>
<gene>
    <name evidence="24" type="primary">IL1B</name>
    <name type="synonym">IL1F2</name>
</gene>
<evidence type="ECO:0000250" key="1">
    <source>
        <dbReference type="UniProtKB" id="P10749"/>
    </source>
</evidence>
<evidence type="ECO:0000269" key="2">
    <source>
    </source>
</evidence>
<evidence type="ECO:0000269" key="3">
    <source>
    </source>
</evidence>
<evidence type="ECO:0000269" key="4">
    <source>
    </source>
</evidence>
<evidence type="ECO:0000269" key="5">
    <source>
    </source>
</evidence>
<evidence type="ECO:0000269" key="6">
    <source>
    </source>
</evidence>
<evidence type="ECO:0000269" key="7">
    <source>
    </source>
</evidence>
<evidence type="ECO:0000269" key="8">
    <source>
    </source>
</evidence>
<evidence type="ECO:0000269" key="9">
    <source>
    </source>
</evidence>
<evidence type="ECO:0000269" key="10">
    <source>
    </source>
</evidence>
<evidence type="ECO:0000269" key="11">
    <source>
    </source>
</evidence>
<evidence type="ECO:0000269" key="12">
    <source>
    </source>
</evidence>
<evidence type="ECO:0000269" key="13">
    <source>
    </source>
</evidence>
<evidence type="ECO:0000269" key="14">
    <source>
    </source>
</evidence>
<evidence type="ECO:0000269" key="15">
    <source>
    </source>
</evidence>
<evidence type="ECO:0000269" key="16">
    <source>
    </source>
</evidence>
<evidence type="ECO:0000269" key="17">
    <source>
    </source>
</evidence>
<evidence type="ECO:0000269" key="18">
    <source>
    </source>
</evidence>
<evidence type="ECO:0000269" key="19">
    <source>
    </source>
</evidence>
<evidence type="ECO:0000269" key="20">
    <source>
    </source>
</evidence>
<evidence type="ECO:0000269" key="21">
    <source>
    </source>
</evidence>
<evidence type="ECO:0000303" key="22">
    <source>
    </source>
</evidence>
<evidence type="ECO:0000305" key="23"/>
<evidence type="ECO:0000312" key="24">
    <source>
        <dbReference type="HGNC" id="HGNC:5992"/>
    </source>
</evidence>
<evidence type="ECO:0007829" key="25">
    <source>
        <dbReference type="PDB" id="5R8F"/>
    </source>
</evidence>
<evidence type="ECO:0007829" key="26">
    <source>
        <dbReference type="PDB" id="5R8Q"/>
    </source>
</evidence>
<evidence type="ECO:0007829" key="27">
    <source>
        <dbReference type="PDB" id="8RYS"/>
    </source>
</evidence>
<organism>
    <name type="scientific">Homo sapiens</name>
    <name type="common">Human</name>
    <dbReference type="NCBI Taxonomy" id="9606"/>
    <lineage>
        <taxon>Eukaryota</taxon>
        <taxon>Metazoa</taxon>
        <taxon>Chordata</taxon>
        <taxon>Craniata</taxon>
        <taxon>Vertebrata</taxon>
        <taxon>Euteleostomi</taxon>
        <taxon>Mammalia</taxon>
        <taxon>Eutheria</taxon>
        <taxon>Euarchontoglires</taxon>
        <taxon>Primates</taxon>
        <taxon>Haplorrhini</taxon>
        <taxon>Catarrhini</taxon>
        <taxon>Hominidae</taxon>
        <taxon>Homo</taxon>
    </lineage>
</organism>
<sequence length="269" mass="30748">MAEVPELASEMMAYYSGNEDDLFFEADGPKQMKCSFQDLDLCPLDGGIQLRISDHHYSKGFRQAASVVVAMDKLRKMLVPCPQTFQENDLSTFFPFIFEEEPIFFDTWDNEAYVHDAPVRSLNCTLRDSQQKSLVMSGPYELKALHLQGQDMEQQVVFSMSFVQGEESNDKIPVALGLKEKNLYLSCVLKDDKPTLQLESVDPKNYPKKKMEKRFVFNKIEINNKLEFESAQFPNWYISTSQAENMPVFLGGTKGGQDITDFTMQFVSS</sequence>
<name>IL1B_HUMAN</name>
<keyword id="KW-0002">3D-structure</keyword>
<keyword id="KW-0202">Cytokine</keyword>
<keyword id="KW-0963">Cytoplasm</keyword>
<keyword id="KW-0903">Direct protein sequencing</keyword>
<keyword id="KW-0395">Inflammatory response</keyword>
<keyword id="KW-0458">Lysosome</keyword>
<keyword id="KW-0497">Mitogen</keyword>
<keyword id="KW-1267">Proteomics identification</keyword>
<keyword id="KW-0666">Pyrogen</keyword>
<keyword id="KW-1185">Reference proteome</keyword>
<keyword id="KW-0964">Secreted</keyword>
<accession>P01584</accession>
<accession>Q53X59</accession>
<accession>Q53XX2</accession>
<accession>Q7M4S7</accession>
<accession>Q7RU01</accession>
<accession>Q96HE5</accession>
<accession>Q9UCT6</accession>
<proteinExistence type="evidence at protein level"/>
<protein>
    <recommendedName>
        <fullName evidence="22">Interleukin-1 beta</fullName>
        <shortName evidence="22">IL-1 beta</shortName>
    </recommendedName>
    <alternativeName>
        <fullName>Catabolin</fullName>
    </alternativeName>
</protein>
<comment type="function">
    <text evidence="2 4 13 18 19 20">Potent pro-inflammatory cytokine (PubMed:10653850, PubMed:12794819, PubMed:28331908, PubMed:3920526). Initially discovered as the major endogenous pyrogen, induces prostaglandin synthesis, neutrophil influx and activation, T-cell activation and cytokine production, B-cell activation and antibody production, and fibroblast proliferation and collagen production (PubMed:3920526). Promotes Th17 differentiation of T-cells. Synergizes with IL12/interleukin-12 to induce IFNG synthesis from T-helper 1 (Th1) cells (PubMed:10653850). Plays a role in angiogenesis by inducing VEGF production synergistically with TNF and IL6 (PubMed:12794819). Involved in transduction of inflammation downstream of pyroptosis: its mature form is specifically released in the extracellular milieu by passing through the gasdermin-D (GSDMD) pore (PubMed:33377178, PubMed:33883744). Acts as a sensor of S.pyogenes infection in skin: cleaved and activated by pyogenes SpeB protease, leading to an inflammatory response that prevents bacterial growth during invasive skin infection (PubMed:28331908).</text>
</comment>
<comment type="activity regulation">
    <text evidence="13 16">(Microbial infection) Cleavage by S.pyogenes cysteine protease SpeB promotes its activation independently of CASP1 (PubMed:28331908, PubMed:32719155). SpeB-mediated maturation of IL1B plays a dual role depending on infection site: while IL1B inflammatory response prevents bacterial growth during invasive skin infections, it promotes streptococcal infection of the nasopharynx by disrupting colonization resistance mediated by the microbiota (PubMed:28331908, PubMed:32719155).</text>
</comment>
<comment type="subunit">
    <text evidence="6 9 14 15">Monomer. In its precursor form, weakly interacts with full-length MEFV; the mature cytokine does not interact at all (PubMed:17431422). Interacts with integrins ITGAV:ITGBV and ITGA5:ITGB1; integrin-binding is required for IL1B signaling (PubMed:29030430). Interacts with cargo receptor TMED10; the interaction is direct and is required for the secretion of IL1B mature form (PubMed:32272059). Interacts with HSP90AB1; the interaction facilitates cargo translocation into the ERGIC (PubMed:32272059). Interacts with HSP90B1; the interaction facilitates cargo translocation into the ERGIC (PubMed:32272059).</text>
</comment>
<comment type="subcellular location">
    <subcellularLocation>
        <location evidence="5">Cytoplasm</location>
        <location evidence="5">Cytosol</location>
    </subcellularLocation>
    <subcellularLocation>
        <location evidence="3 5 19">Secreted</location>
    </subcellularLocation>
    <subcellularLocation>
        <location evidence="5">Lysosome</location>
    </subcellularLocation>
    <subcellularLocation>
        <location evidence="1">Secreted</location>
        <location evidence="1">Extracellular exosome</location>
    </subcellularLocation>
    <text evidence="5 11 15 18 19">The precursor is cytosolic (PubMed:15192144). In response to inflammasome-activating signals, such as ATP for NLRP3 inflammasome or bacterial flagellin for NLRC4 inflammasome, cleaved and secreted (PubMed:24201029, PubMed:33377178, PubMed:33883744). Mature form is secreted and released in the extracellular milieu by passing through the gasdermin-D (GSDMD) pore (PubMed:33883744). In contrast, the precursor form is not released, due to the presence of an acidic region that is proteolytically removed by CASP1 during maturation (PubMed:33883744). The secretion is dependent on protein unfolding and facilitated by the cargo receptor TMED10 (PubMed:32272059).</text>
</comment>
<comment type="tissue specificity">
    <text evidence="5">Expressed in activated monocytes/macrophages (at protein level).</text>
</comment>
<comment type="induction">
    <text evidence="5 8 10">By LPS (PubMed:15192144). Transcription and translation induced by M.tuberculosis and a number of different M.tuberculosis components in macrophages; EsxA is the most potent activator tested (at protein level) (PubMed:20148899). In pancreatic islets, release is increased by high glucose treatment. In pancreatic islets and macrophages, release is also increased by endocannabinoid anandamide/AEA (PubMed:23955712).</text>
</comment>
<comment type="PTM">
    <text evidence="5">Activation of the IL1B precursor involves a CASP1-catalyzed proteolytic cleavage. Processing and secretion are temporarily associated.</text>
</comment>
<comment type="PTM">
    <text evidence="13 16 21">(Microbial infection) Cleavage by S.pyogenes cysteine protease SpeB promotes its activation independently of CASP1.</text>
</comment>
<comment type="miscellaneous">
    <text evidence="5">The IL1B production occurs in 2 steps, each being controlled by different stimuli. First, inflammatory signals, such as LPS, stimulate the synthesis and promote the accumulation of cytosolic stores of pro-IL1B (priming). Then additional signals are required for inflammasome assembly, leading to CASP1 activation, pro-IL1B processing and eventually secretion of the active cytokine. IL1B processing and secretion are temporarily associated.</text>
</comment>
<comment type="similarity">
    <text evidence="23">Belongs to the IL-1 family.</text>
</comment>
<comment type="online information" name="Atlas of Genetics and Cytogenetics in Oncology and Haematology">
    <link uri="https://atlasgeneticsoncology.org/gene/40950/IL1B"/>
</comment>
<comment type="online information" name="Wikipedia">
    <link uri="https://en.wikipedia.org/wiki/Interleukin_1"/>
    <text>Interleukin-1 entry</text>
</comment>